<organism>
    <name type="scientific">Homo sapiens</name>
    <name type="common">Human</name>
    <dbReference type="NCBI Taxonomy" id="9606"/>
    <lineage>
        <taxon>Eukaryota</taxon>
        <taxon>Metazoa</taxon>
        <taxon>Chordata</taxon>
        <taxon>Craniata</taxon>
        <taxon>Vertebrata</taxon>
        <taxon>Euteleostomi</taxon>
        <taxon>Mammalia</taxon>
        <taxon>Eutheria</taxon>
        <taxon>Euarchontoglires</taxon>
        <taxon>Primates</taxon>
        <taxon>Haplorrhini</taxon>
        <taxon>Catarrhini</taxon>
        <taxon>Hominidae</taxon>
        <taxon>Homo</taxon>
    </lineage>
</organism>
<keyword id="KW-0002">3D-structure</keyword>
<keyword id="KW-0877">Alternative promoter usage</keyword>
<keyword id="KW-0025">Alternative splicing</keyword>
<keyword id="KW-1003">Cell membrane</keyword>
<keyword id="KW-0144">Charcot-Marie-Tooth disease</keyword>
<keyword id="KW-0868">Chloride</keyword>
<keyword id="KW-0225">Disease variant</keyword>
<keyword id="KW-1015">Disulfide bond</keyword>
<keyword id="KW-0325">Glycoprotein</keyword>
<keyword id="KW-0406">Ion transport</keyword>
<keyword id="KW-0472">Membrane</keyword>
<keyword id="KW-0479">Metal-binding</keyword>
<keyword id="KW-0523">Neurodegeneration</keyword>
<keyword id="KW-0622">Neuropathy</keyword>
<keyword id="KW-0597">Phosphoprotein</keyword>
<keyword id="KW-0630">Potassium</keyword>
<keyword id="KW-0633">Potassium transport</keyword>
<keyword id="KW-1267">Proteomics identification</keyword>
<keyword id="KW-1185">Reference proteome</keyword>
<keyword id="KW-0769">Symport</keyword>
<keyword id="KW-0812">Transmembrane</keyword>
<keyword id="KW-1133">Transmembrane helix</keyword>
<keyword id="KW-0813">Transport</keyword>
<gene>
    <name evidence="31" type="primary">SLC12A6</name>
    <name evidence="24" type="synonym">KCC3</name>
</gene>
<accession>Q9UHW9</accession>
<accession>A0AV76</accession>
<accession>Q2VI00</accession>
<accession>Q7Z2E7</accession>
<accession>Q7Z4G5</accession>
<accession>Q8TDD4</accession>
<accession>Q9UFR2</accession>
<accession>Q9Y642</accession>
<accession>Q9Y665</accession>
<feature type="chain" id="PRO_0000178037" description="Solute carrier family 12 member 6">
    <location>
        <begin position="1"/>
        <end position="1150"/>
    </location>
</feature>
<feature type="topological domain" description="Cytoplasmic" evidence="17 32">
    <location>
        <begin position="1"/>
        <end position="135"/>
    </location>
</feature>
<feature type="transmembrane region" description="Discontinuously helical; Name=1" evidence="17 32">
    <location>
        <begin position="136"/>
        <end position="158"/>
    </location>
</feature>
<feature type="topological domain" description="Extracellular" evidence="17 32">
    <location>
        <begin position="159"/>
        <end position="165"/>
    </location>
</feature>
<feature type="transmembrane region" description="Helical; Name=2" evidence="17 32">
    <location>
        <begin position="166"/>
        <end position="188"/>
    </location>
</feature>
<feature type="topological domain" description="Cytoplasmic" evidence="17 32">
    <location>
        <begin position="189"/>
        <end position="211"/>
    </location>
</feature>
<feature type="transmembrane region" description="Helical; Name=3" evidence="17 32">
    <location>
        <begin position="212"/>
        <end position="245"/>
    </location>
</feature>
<feature type="topological domain" description="Extracellular" evidence="17 32">
    <location>
        <begin position="246"/>
        <end position="263"/>
    </location>
</feature>
<feature type="transmembrane region" description="Helical; Name=4" evidence="17 32">
    <location>
        <begin position="264"/>
        <end position="287"/>
    </location>
</feature>
<feature type="transmembrane region" description="Helical; Name=5" evidence="17 32">
    <location>
        <begin position="288"/>
        <end position="316"/>
    </location>
</feature>
<feature type="topological domain" description="Extracellular" evidence="17 32">
    <location>
        <begin position="317"/>
        <end position="433"/>
    </location>
</feature>
<feature type="transmembrane region" description="Helical; Name=6" evidence="17 32">
    <location>
        <begin position="434"/>
        <end position="454"/>
    </location>
</feature>
<feature type="topological domain" description="Cytoplasmic" evidence="17 32">
    <location>
        <begin position="455"/>
        <end position="464"/>
    </location>
</feature>
<feature type="transmembrane region" description="Helical; Name=7" evidence="17 32">
    <location>
        <begin position="465"/>
        <end position="487"/>
    </location>
</feature>
<feature type="topological domain" description="Extracellular" evidence="17 32">
    <location>
        <begin position="488"/>
        <end position="518"/>
    </location>
</feature>
<feature type="transmembrane region" description="Helical; Name=8" evidence="17 32">
    <location>
        <begin position="519"/>
        <end position="545"/>
    </location>
</feature>
<feature type="topological domain" description="Cytoplasmic" evidence="17 32">
    <location>
        <begin position="546"/>
        <end position="568"/>
    </location>
</feature>
<feature type="transmembrane region" description="Helical; Name=9" evidence="17 32">
    <location>
        <begin position="569"/>
        <end position="589"/>
    </location>
</feature>
<feature type="transmembrane region" description="Helical; Name=10" evidence="17 32">
    <location>
        <begin position="590"/>
        <end position="612"/>
    </location>
</feature>
<feature type="topological domain" description="Cytoplasmic" evidence="17 32">
    <location>
        <begin position="613"/>
        <end position="629"/>
    </location>
</feature>
<feature type="transmembrane region" description="Helical; Name=11" evidence="17 32">
    <location>
        <begin position="630"/>
        <end position="649"/>
    </location>
</feature>
<feature type="transmembrane region" description="Helical; Name=12" evidence="32">
    <location>
        <begin position="650"/>
        <end position="665"/>
    </location>
</feature>
<feature type="topological domain" description="Cytoplasmic" evidence="17 32">
    <location>
        <begin position="666"/>
        <end position="1150"/>
    </location>
</feature>
<feature type="region of interest" description="Disordered" evidence="3">
    <location>
        <begin position="20"/>
        <end position="66"/>
    </location>
</feature>
<feature type="region of interest" description="Disordered" evidence="3">
    <location>
        <begin position="161"/>
        <end position="181"/>
    </location>
</feature>
<feature type="region of interest" description="Scissor helix" evidence="17 19 32 34 35 36 37 38 39">
    <location>
        <begin position="682"/>
        <end position="691"/>
    </location>
</feature>
<feature type="region of interest" description="Interaction with CKB" evidence="11">
    <location>
        <begin position="1133"/>
        <end position="1150"/>
    </location>
</feature>
<feature type="compositionally biased region" description="Low complexity" evidence="3">
    <location>
        <begin position="28"/>
        <end position="45"/>
    </location>
</feature>
<feature type="compositionally biased region" description="Basic and acidic residues" evidence="3">
    <location>
        <begin position="163"/>
        <end position="177"/>
    </location>
</feature>
<feature type="binding site" evidence="17 32 33">
    <location>
        <position position="147"/>
    </location>
    <ligand>
        <name>K(+)</name>
        <dbReference type="ChEBI" id="CHEBI:29103"/>
    </ligand>
</feature>
<feature type="binding site" evidence="17 32 33">
    <location>
        <position position="148"/>
    </location>
    <ligand>
        <name>K(+)</name>
        <dbReference type="ChEBI" id="CHEBI:29103"/>
    </ligand>
</feature>
<feature type="binding site" evidence="17 32">
    <location>
        <position position="151"/>
    </location>
    <ligand>
        <name>chloride</name>
        <dbReference type="ChEBI" id="CHEBI:17996"/>
        <label>2</label>
    </ligand>
</feature>
<feature type="binding site" evidence="17 32">
    <location>
        <position position="443"/>
    </location>
    <ligand>
        <name>chloride</name>
        <dbReference type="ChEBI" id="CHEBI:17996"/>
        <label>2</label>
    </ligand>
</feature>
<feature type="binding site" evidence="17 32 33">
    <location>
        <position position="443"/>
    </location>
    <ligand>
        <name>K(+)</name>
        <dbReference type="ChEBI" id="CHEBI:29103"/>
    </ligand>
</feature>
<feature type="binding site" evidence="17 33">
    <location>
        <position position="444"/>
    </location>
    <ligand>
        <name>chloride</name>
        <dbReference type="ChEBI" id="CHEBI:17996"/>
        <label>2</label>
    </ligand>
</feature>
<feature type="binding site" evidence="17 32 33">
    <location>
        <position position="444"/>
    </location>
    <ligand>
        <name>K(+)</name>
        <dbReference type="ChEBI" id="CHEBI:29103"/>
    </ligand>
</feature>
<feature type="binding site" evidence="17 32 33">
    <location>
        <position position="446"/>
    </location>
    <ligand>
        <name>K(+)</name>
        <dbReference type="ChEBI" id="CHEBI:29103"/>
    </ligand>
</feature>
<feature type="binding site" evidence="17 32 33">
    <location>
        <position position="447"/>
    </location>
    <ligand>
        <name>chloride</name>
        <dbReference type="ChEBI" id="CHEBI:17996"/>
        <label>1</label>
    </ligand>
</feature>
<feature type="binding site" evidence="17 32 33">
    <location>
        <position position="448"/>
    </location>
    <ligand>
        <name>chloride</name>
        <dbReference type="ChEBI" id="CHEBI:17996"/>
        <label>1</label>
    </ligand>
</feature>
<feature type="binding site" evidence="17 32 33">
    <location>
        <position position="603"/>
    </location>
    <ligand>
        <name>chloride</name>
        <dbReference type="ChEBI" id="CHEBI:17996"/>
        <label>1</label>
    </ligand>
</feature>
<feature type="modified residue" description="Phosphoserine" evidence="12 41 43">
    <location>
        <position position="32"/>
    </location>
</feature>
<feature type="modified residue" description="Phosphoserine" evidence="43">
    <location>
        <position position="120"/>
    </location>
</feature>
<feature type="modified residue" description="Phosphoserine" evidence="43">
    <location>
        <position position="148"/>
    </location>
</feature>
<feature type="modified residue" description="Phosphoserine" evidence="19">
    <location>
        <position position="736"/>
    </location>
</feature>
<feature type="modified residue" description="Phosphothreonine" evidence="19">
    <location>
        <position position="778"/>
    </location>
</feature>
<feature type="modified residue" description="Phosphoserine" evidence="19">
    <location>
        <position position="981"/>
    </location>
</feature>
<feature type="modified residue" description="Phosphothreonine; by OXSR1 and STK39" evidence="12 15 19">
    <location>
        <position position="991"/>
    </location>
</feature>
<feature type="modified residue" description="Phosphoserine" evidence="12">
    <location>
        <position position="1023"/>
    </location>
</feature>
<feature type="modified residue" description="Phosphoserine" evidence="12">
    <location>
        <position position="1029"/>
    </location>
</feature>
<feature type="modified residue" description="Phosphoserine" evidence="40 42 43">
    <location>
        <position position="1032"/>
    </location>
</feature>
<feature type="modified residue" description="Phosphothreonine; by OXSR1 and STK39" evidence="12">
    <location>
        <position position="1048"/>
    </location>
</feature>
<feature type="modified residue" description="Phosphotyrosine" evidence="19">
    <location>
        <position position="1121"/>
    </location>
</feature>
<feature type="glycosylation site" description="N-linked (GlcNAc...) asparagine" evidence="2">
    <location>
        <position position="379"/>
    </location>
</feature>
<feature type="glycosylation site" description="N-linked (GlcNAc...) asparagine" evidence="2">
    <location>
        <position position="398"/>
    </location>
</feature>
<feature type="glycosylation site" description="N-linked (GlcNAc...) asparagine" evidence="2">
    <location>
        <position position="411"/>
    </location>
</feature>
<feature type="glycosylation site" description="N-linked (GlcNAc...) asparagine" evidence="2">
    <location>
        <position position="428"/>
    </location>
</feature>
<feature type="disulfide bond" evidence="32 33 34 35 36 37 38 39">
    <location>
        <begin position="375"/>
        <end position="390"/>
    </location>
</feature>
<feature type="disulfide bond" evidence="32 34 35 36 37 38 39">
    <location>
        <begin position="410"/>
        <end position="420"/>
    </location>
</feature>
<feature type="splice variant" id="VSP_041387" description="In isoform 5." evidence="27">
    <location>
        <begin position="1"/>
        <end position="59"/>
    </location>
</feature>
<feature type="splice variant" id="VSP_006115" description="In isoform 2 and isoform 6." evidence="22 25 26">
    <location>
        <begin position="1"/>
        <end position="51"/>
    </location>
</feature>
<feature type="splice variant" id="VSP_041388" description="In isoform 4." evidence="27">
    <location>
        <begin position="1"/>
        <end position="9"/>
    </location>
</feature>
<feature type="splice variant" id="VSP_006116" description="In isoform 2 and isoform 6." evidence="22 25 26">
    <original>PETSRSEPMSEMSGATTSLATVALDPPSDRTSHPQDVIE</original>
    <variation>MPHFTVTKVEDPEEGAAASISQEPSLADIKARIQDSDEP</variation>
    <location>
        <begin position="52"/>
        <end position="90"/>
    </location>
</feature>
<feature type="splice variant" id="VSP_041389" description="In isoform 3 and isoform 6." evidence="27">
    <location>
        <begin position="91"/>
        <end position="105"/>
    </location>
</feature>
<feature type="sequence variant" id="VAR_087853" description="In ACCPN; loss of potassium-chloride cotransport activity; abnormal perinuclear localization; stabilization of homodimeric state; dbSNP:rs121908429." evidence="9 14">
    <original>R</original>
    <variation>C</variation>
    <location>
        <position position="207"/>
    </location>
</feature>
<feature type="sequence variant" id="VAR_087854" description="In CMT2II." evidence="16 20">
    <original>R</original>
    <variation>H</variation>
    <location>
        <position position="207"/>
    </location>
</feature>
<feature type="sequence variant" id="VAR_087855" description="In CMT2II." evidence="20">
    <original>E</original>
    <variation>K</variation>
    <location>
        <position position="289"/>
    </location>
</feature>
<feature type="sequence variant" id="VAR_014960" description="In dbSNP:rs2705339.">
    <original>F</original>
    <variation>S</variation>
    <location>
        <position position="415"/>
    </location>
</feature>
<feature type="sequence variant" id="VAR_087856" description="In CMT2II." evidence="20">
    <location>
        <begin position="578"/>
        <end position="1150"/>
    </location>
</feature>
<feature type="sequence variant" id="VAR_087857" description="In ACCPN; dbSNP:rs121908428." evidence="7">
    <location>
        <begin position="675"/>
        <end position="1150"/>
    </location>
</feature>
<feature type="sequence variant" id="VAR_087858" description="In CMT2II." evidence="16">
    <original>Y</original>
    <variation>C</variation>
    <location>
        <position position="679"/>
    </location>
</feature>
<feature type="sequence variant" id="VAR_087859" description="In CMT2II; uncertain significance." evidence="20">
    <original>Y</original>
    <variation>S</variation>
    <location>
        <position position="679"/>
    </location>
</feature>
<feature type="sequence variant" id="VAR_087860" description="In CMT2II; abolished WNK kinase-dependent inhibitory phosphorylation; constitutively enhanced potassium-chloride cotransport activity; reduced acute swelling response to hypotonic stress." evidence="15">
    <original>T</original>
    <variation>A</variation>
    <location>
        <position position="991"/>
    </location>
</feature>
<feature type="sequence variant" id="VAR_087861" description="In ACCPN; loss of potassium-chloride cotransport activity in Xenopus laevis oocytes likely due to impaired transit to cell membrane; loss of cell membrane localization; dbSNP:rs752155450." evidence="7 10 11">
    <location>
        <begin position="1011"/>
        <end position="1150"/>
    </location>
</feature>
<feature type="sequence variant" id="VAR_087862" description="In ACCPN." evidence="10">
    <location>
        <begin position="1015"/>
        <end position="1150"/>
    </location>
</feature>
<feature type="sequence variant" id="VAR_087863" description="In ACCPN; loss of potassium-chloride cotransport activity; abnormal localization within the cytoplasm instead of cell membrane; dbSNP:rs606231229." evidence="14">
    <location>
        <begin position="1134"/>
        <end position="1150"/>
    </location>
</feature>
<feature type="mutagenesis site" description="Increases Rb(+) uptake; when associated with D-991 and D-991." evidence="19">
    <original>S</original>
    <variation>A</variation>
    <location>
        <position position="96"/>
    </location>
</feature>
<feature type="mutagenesis site" description="Decreases Rb(+) uptake; when associated with D-991 and D-1048." evidence="19">
    <original>S</original>
    <variation>D</variation>
    <location>
        <position position="96"/>
    </location>
</feature>
<feature type="mutagenesis site" description="Decrease in Cl(-) efflux." evidence="21">
    <original>R</original>
    <variation>A</variation>
    <location>
        <position position="505"/>
    </location>
</feature>
<feature type="mutagenesis site" description="Decrease in Cl(-) efflux." evidence="21">
    <original>Q</original>
    <variation>A</variation>
    <location>
        <position position="586"/>
    </location>
</feature>
<feature type="mutagenesis site" description="Increases transporter activity." evidence="17">
    <original>R</original>
    <variation>G</variation>
    <location>
        <position position="668"/>
    </location>
</feature>
<feature type="mutagenesis site" description="No effect on transporter activity." evidence="17">
    <original>K</original>
    <variation>R</variation>
    <location>
        <position position="715"/>
    </location>
</feature>
<feature type="mutagenesis site" description="Slightly reduces transporter activity." evidence="17">
    <original>E</original>
    <variation>A</variation>
    <location>
        <position position="746"/>
    </location>
</feature>
<feature type="mutagenesis site" description="Decreased phosphorylation by WNK kinases, leading to increased potassium-chloride cotransport activity. Increases Rb(+) uptake; when associated with D-96 and D-1048." evidence="12 19">
    <original>T</original>
    <variation>A</variation>
    <location>
        <position position="991"/>
    </location>
</feature>
<feature type="mutagenesis site" description="Decreases Rb(+) uptake; when associated with D-96 and D-1048." evidence="19">
    <original>T</original>
    <variation>D</variation>
    <location>
        <position position="991"/>
    </location>
</feature>
<feature type="mutagenesis site" description="Does not affect potassium-chloride cotransport activity." evidence="12">
    <original>S</original>
    <variation>A</variation>
    <location>
        <position position="1032"/>
    </location>
</feature>
<feature type="mutagenesis site" description="Decreased phosphorylation by WNK kinases, leading to increased potassium-chloride cotransport activity. Increases Rb(+) uptake; when associated with D-96 and D-991." evidence="12 19">
    <original>T</original>
    <variation>A</variation>
    <location>
        <position position="1048"/>
    </location>
</feature>
<feature type="mutagenesis site" description="Decreases Rb(+) uptake; when associated with D-96 and D-991." evidence="19">
    <original>T</original>
    <variation>D</variation>
    <location>
        <position position="1048"/>
    </location>
</feature>
<feature type="sequence conflict" description="In Ref. 1; AAF24986." evidence="29" ref="1">
    <original>E</original>
    <variation>H</variation>
    <location>
        <position position="802"/>
    </location>
</feature>
<feature type="strand" evidence="44">
    <location>
        <begin position="165"/>
        <end position="167"/>
    </location>
</feature>
<feature type="helix" evidence="44">
    <location>
        <begin position="168"/>
        <end position="170"/>
    </location>
</feature>
<feature type="helix" evidence="46">
    <location>
        <begin position="178"/>
        <end position="181"/>
    </location>
</feature>
<feature type="helix" evidence="45">
    <location>
        <begin position="187"/>
        <end position="190"/>
    </location>
</feature>
<feature type="helix" evidence="45">
    <location>
        <begin position="192"/>
        <end position="199"/>
    </location>
</feature>
<feature type="helix" evidence="45">
    <location>
        <begin position="202"/>
        <end position="206"/>
    </location>
</feature>
<feature type="helix" evidence="45">
    <location>
        <begin position="208"/>
        <end position="213"/>
    </location>
</feature>
<feature type="helix" evidence="45">
    <location>
        <begin position="216"/>
        <end position="241"/>
    </location>
</feature>
<feature type="turn" evidence="45">
    <location>
        <begin position="242"/>
        <end position="244"/>
    </location>
</feature>
<feature type="helix" evidence="45">
    <location>
        <begin position="252"/>
        <end position="259"/>
    </location>
</feature>
<feature type="turn" evidence="45">
    <location>
        <begin position="262"/>
        <end position="264"/>
    </location>
</feature>
<feature type="turn" evidence="45">
    <location>
        <begin position="266"/>
        <end position="268"/>
    </location>
</feature>
<feature type="helix" evidence="45">
    <location>
        <begin position="269"/>
        <end position="292"/>
    </location>
</feature>
<feature type="turn" evidence="45">
    <location>
        <begin position="293"/>
        <end position="295"/>
    </location>
</feature>
<feature type="strand" evidence="45">
    <location>
        <begin position="306"/>
        <end position="308"/>
    </location>
</feature>
<feature type="helix" evidence="45">
    <location>
        <begin position="312"/>
        <end position="335"/>
    </location>
</feature>
<feature type="helix" evidence="45">
    <location>
        <begin position="338"/>
        <end position="342"/>
    </location>
</feature>
<feature type="helix" evidence="45">
    <location>
        <begin position="344"/>
        <end position="364"/>
    </location>
</feature>
<feature type="turn" evidence="45">
    <location>
        <begin position="365"/>
        <end position="367"/>
    </location>
</feature>
<feature type="strand" evidence="45">
    <location>
        <begin position="373"/>
        <end position="377"/>
    </location>
</feature>
<feature type="strand" evidence="45">
    <location>
        <begin position="380"/>
        <end position="382"/>
    </location>
</feature>
<feature type="strand" evidence="45">
    <location>
        <begin position="390"/>
        <end position="393"/>
    </location>
</feature>
<feature type="strand" evidence="45">
    <location>
        <begin position="395"/>
        <end position="400"/>
    </location>
</feature>
<feature type="helix" evidence="45">
    <location>
        <begin position="404"/>
        <end position="408"/>
    </location>
</feature>
<feature type="strand" evidence="45">
    <location>
        <begin position="409"/>
        <end position="411"/>
    </location>
</feature>
<feature type="turn" evidence="45">
    <location>
        <begin position="422"/>
        <end position="424"/>
    </location>
</feature>
<feature type="strand" evidence="45">
    <location>
        <begin position="425"/>
        <end position="427"/>
    </location>
</feature>
<feature type="strand" evidence="45">
    <location>
        <begin position="429"/>
        <end position="434"/>
    </location>
</feature>
<feature type="strand" evidence="44">
    <location>
        <begin position="438"/>
        <end position="440"/>
    </location>
</feature>
<feature type="helix" evidence="45">
    <location>
        <begin position="442"/>
        <end position="445"/>
    </location>
</feature>
<feature type="strand" evidence="45">
    <location>
        <begin position="446"/>
        <end position="448"/>
    </location>
</feature>
<feature type="strand" evidence="44">
    <location>
        <begin position="461"/>
        <end position="463"/>
    </location>
</feature>
<feature type="strand" evidence="45">
    <location>
        <begin position="474"/>
        <end position="476"/>
    </location>
</feature>
<feature type="helix" evidence="45">
    <location>
        <begin position="485"/>
        <end position="492"/>
    </location>
</feature>
<feature type="helix" evidence="45">
    <location>
        <begin position="493"/>
        <end position="495"/>
    </location>
</feature>
<feature type="helix" evidence="45">
    <location>
        <begin position="499"/>
        <end position="503"/>
    </location>
</feature>
<feature type="helix" evidence="45">
    <location>
        <begin position="506"/>
        <end position="508"/>
    </location>
</feature>
<feature type="strand" evidence="45">
    <location>
        <begin position="509"/>
        <end position="511"/>
    </location>
</feature>
<feature type="helix" evidence="45">
    <location>
        <begin position="512"/>
        <end position="541"/>
    </location>
</feature>
<feature type="helix" evidence="45">
    <location>
        <begin position="544"/>
        <end position="547"/>
    </location>
</feature>
<feature type="helix" evidence="45">
    <location>
        <begin position="550"/>
        <end position="552"/>
    </location>
</feature>
<feature type="turn" evidence="45">
    <location>
        <begin position="553"/>
        <end position="557"/>
    </location>
</feature>
<feature type="helix" evidence="45">
    <location>
        <begin position="560"/>
        <end position="564"/>
    </location>
</feature>
<feature type="strand" evidence="45">
    <location>
        <begin position="565"/>
        <end position="567"/>
    </location>
</feature>
<feature type="helix" evidence="45">
    <location>
        <begin position="570"/>
        <end position="599"/>
    </location>
</feature>
<feature type="turn" evidence="45">
    <location>
        <begin position="600"/>
        <end position="602"/>
    </location>
</feature>
<feature type="helix" evidence="45">
    <location>
        <begin position="605"/>
        <end position="610"/>
    </location>
</feature>
<feature type="helix" evidence="45">
    <location>
        <begin position="621"/>
        <end position="635"/>
    </location>
</feature>
<feature type="helix" evidence="45">
    <location>
        <begin position="639"/>
        <end position="666"/>
    </location>
</feature>
<feature type="helix" evidence="45">
    <location>
        <begin position="681"/>
        <end position="696"/>
    </location>
</feature>
<feature type="turn" evidence="45">
    <location>
        <begin position="697"/>
        <end position="699"/>
    </location>
</feature>
<feature type="helix" evidence="45">
    <location>
        <begin position="701"/>
        <end position="723"/>
    </location>
</feature>
<feature type="helix" evidence="45">
    <location>
        <begin position="729"/>
        <end position="745"/>
    </location>
</feature>
<feature type="strand" evidence="44">
    <location>
        <begin position="746"/>
        <end position="748"/>
    </location>
</feature>
<feature type="strand" evidence="45">
    <location>
        <begin position="759"/>
        <end position="762"/>
    </location>
</feature>
<feature type="strand" evidence="46">
    <location>
        <begin position="769"/>
        <end position="772"/>
    </location>
</feature>
<feature type="helix" evidence="45">
    <location>
        <begin position="775"/>
        <end position="784"/>
    </location>
</feature>
<feature type="strand" evidence="45">
    <location>
        <begin position="790"/>
        <end position="798"/>
    </location>
</feature>
<feature type="turn" evidence="45">
    <location>
        <begin position="800"/>
        <end position="802"/>
    </location>
</feature>
<feature type="helix" evidence="45">
    <location>
        <begin position="804"/>
        <end position="820"/>
    </location>
</feature>
<feature type="strand" evidence="45">
    <location>
        <begin position="825"/>
        <end position="834"/>
    </location>
</feature>
<feature type="helix" evidence="45">
    <location>
        <begin position="835"/>
        <end position="844"/>
    </location>
</feature>
<feature type="strand" evidence="45">
    <location>
        <begin position="847"/>
        <end position="852"/>
    </location>
</feature>
<feature type="strand" evidence="45">
    <location>
        <begin position="854"/>
        <end position="859"/>
    </location>
</feature>
<feature type="turn" evidence="45">
    <location>
        <begin position="862"/>
        <end position="866"/>
    </location>
</feature>
<feature type="strand" evidence="45">
    <location>
        <begin position="867"/>
        <end position="869"/>
    </location>
</feature>
<feature type="helix" evidence="45">
    <location>
        <begin position="872"/>
        <end position="885"/>
    </location>
</feature>
<feature type="strand" evidence="45">
    <location>
        <begin position="889"/>
        <end position="895"/>
    </location>
</feature>
<feature type="helix" evidence="45">
    <location>
        <begin position="896"/>
        <end position="898"/>
    </location>
</feature>
<feature type="strand" evidence="45">
    <location>
        <begin position="910"/>
        <end position="915"/>
    </location>
</feature>
<feature type="helix" evidence="45">
    <location>
        <begin position="920"/>
        <end position="930"/>
    </location>
</feature>
<feature type="strand" evidence="44">
    <location>
        <begin position="932"/>
        <end position="934"/>
    </location>
</feature>
<feature type="turn" evidence="45">
    <location>
        <begin position="935"/>
        <end position="938"/>
    </location>
</feature>
<feature type="strand" evidence="45">
    <location>
        <begin position="940"/>
        <end position="947"/>
    </location>
</feature>
<feature type="strand" evidence="45">
    <location>
        <begin position="949"/>
        <end position="951"/>
    </location>
</feature>
<feature type="helix" evidence="45">
    <location>
        <begin position="954"/>
        <end position="965"/>
    </location>
</feature>
<feature type="turn" evidence="45">
    <location>
        <begin position="966"/>
        <end position="968"/>
    </location>
</feature>
<feature type="strand" evidence="45">
    <location>
        <begin position="971"/>
        <end position="977"/>
    </location>
</feature>
<feature type="turn" evidence="44">
    <location>
        <begin position="980"/>
        <end position="982"/>
    </location>
</feature>
<feature type="helix" evidence="44">
    <location>
        <begin position="984"/>
        <end position="987"/>
    </location>
</feature>
<feature type="strand" evidence="44">
    <location>
        <begin position="988"/>
        <end position="990"/>
    </location>
</feature>
<feature type="turn" evidence="44">
    <location>
        <begin position="991"/>
        <end position="993"/>
    </location>
</feature>
<feature type="helix" evidence="44">
    <location>
        <begin position="994"/>
        <end position="1001"/>
    </location>
</feature>
<feature type="strand" evidence="44">
    <location>
        <begin position="1002"/>
        <end position="1004"/>
    </location>
</feature>
<feature type="strand" evidence="44">
    <location>
        <begin position="1008"/>
        <end position="1010"/>
    </location>
</feature>
<feature type="helix" evidence="44">
    <location>
        <begin position="1015"/>
        <end position="1019"/>
    </location>
</feature>
<feature type="turn" evidence="45">
    <location>
        <begin position="1081"/>
        <end position="1087"/>
    </location>
</feature>
<feature type="helix" evidence="45">
    <location>
        <begin position="1088"/>
        <end position="1098"/>
    </location>
</feature>
<feature type="strand" evidence="45">
    <location>
        <begin position="1104"/>
        <end position="1107"/>
    </location>
</feature>
<feature type="strand" evidence="44">
    <location>
        <begin position="1113"/>
        <end position="1116"/>
    </location>
</feature>
<feature type="helix" evidence="45">
    <location>
        <begin position="1118"/>
        <end position="1128"/>
    </location>
</feature>
<feature type="turn" evidence="45">
    <location>
        <begin position="1129"/>
        <end position="1131"/>
    </location>
</feature>
<feature type="strand" evidence="45">
    <location>
        <begin position="1133"/>
        <end position="1139"/>
    </location>
</feature>
<evidence type="ECO:0000250" key="1">
    <source>
        <dbReference type="UniProtKB" id="Q924N4"/>
    </source>
</evidence>
<evidence type="ECO:0000255" key="2"/>
<evidence type="ECO:0000256" key="3">
    <source>
        <dbReference type="SAM" id="MobiDB-lite"/>
    </source>
</evidence>
<evidence type="ECO:0000269" key="4">
    <source>
    </source>
</evidence>
<evidence type="ECO:0000269" key="5">
    <source>
    </source>
</evidence>
<evidence type="ECO:0000269" key="6">
    <source>
    </source>
</evidence>
<evidence type="ECO:0000269" key="7">
    <source>
    </source>
</evidence>
<evidence type="ECO:0000269" key="8">
    <source>
    </source>
</evidence>
<evidence type="ECO:0000269" key="9">
    <source>
    </source>
</evidence>
<evidence type="ECO:0000269" key="10">
    <source>
    </source>
</evidence>
<evidence type="ECO:0000269" key="11">
    <source>
    </source>
</evidence>
<evidence type="ECO:0000269" key="12">
    <source>
    </source>
</evidence>
<evidence type="ECO:0000269" key="13">
    <source>
    </source>
</evidence>
<evidence type="ECO:0000269" key="14">
    <source>
    </source>
</evidence>
<evidence type="ECO:0000269" key="15">
    <source>
    </source>
</evidence>
<evidence type="ECO:0000269" key="16">
    <source>
    </source>
</evidence>
<evidence type="ECO:0000269" key="17">
    <source>
    </source>
</evidence>
<evidence type="ECO:0000269" key="18">
    <source>
    </source>
</evidence>
<evidence type="ECO:0000269" key="19">
    <source>
    </source>
</evidence>
<evidence type="ECO:0000269" key="20">
    <source>
    </source>
</evidence>
<evidence type="ECO:0000269" key="21">
    <source>
    </source>
</evidence>
<evidence type="ECO:0000303" key="22">
    <source>
    </source>
</evidence>
<evidence type="ECO:0000303" key="23">
    <source>
    </source>
</evidence>
<evidence type="ECO:0000303" key="24">
    <source>
    </source>
</evidence>
<evidence type="ECO:0000303" key="25">
    <source>
    </source>
</evidence>
<evidence type="ECO:0000303" key="26">
    <source>
    </source>
</evidence>
<evidence type="ECO:0000303" key="27">
    <source>
    </source>
</evidence>
<evidence type="ECO:0000303" key="28">
    <source>
    </source>
</evidence>
<evidence type="ECO:0000305" key="29"/>
<evidence type="ECO:0000305" key="30">
    <source>
    </source>
</evidence>
<evidence type="ECO:0000312" key="31">
    <source>
        <dbReference type="HGNC" id="HGNC:10914"/>
    </source>
</evidence>
<evidence type="ECO:0007744" key="32">
    <source>
        <dbReference type="PDB" id="6M1Y"/>
    </source>
</evidence>
<evidence type="ECO:0007744" key="33">
    <source>
        <dbReference type="PDB" id="6M22"/>
    </source>
</evidence>
<evidence type="ECO:0007744" key="34">
    <source>
        <dbReference type="PDB" id="6Y5R"/>
    </source>
</evidence>
<evidence type="ECO:0007744" key="35">
    <source>
        <dbReference type="PDB" id="6Y5V"/>
    </source>
</evidence>
<evidence type="ECO:0007744" key="36">
    <source>
        <dbReference type="PDB" id="7AIN"/>
    </source>
</evidence>
<evidence type="ECO:0007744" key="37">
    <source>
        <dbReference type="PDB" id="7AIO"/>
    </source>
</evidence>
<evidence type="ECO:0007744" key="38">
    <source>
        <dbReference type="PDB" id="7D90"/>
    </source>
</evidence>
<evidence type="ECO:0007744" key="39">
    <source>
        <dbReference type="PDB" id="7NGB"/>
    </source>
</evidence>
<evidence type="ECO:0007744" key="40">
    <source>
    </source>
</evidence>
<evidence type="ECO:0007744" key="41">
    <source>
    </source>
</evidence>
<evidence type="ECO:0007744" key="42">
    <source>
    </source>
</evidence>
<evidence type="ECO:0007744" key="43">
    <source>
    </source>
</evidence>
<evidence type="ECO:0007829" key="44">
    <source>
        <dbReference type="PDB" id="6M1Y"/>
    </source>
</evidence>
<evidence type="ECO:0007829" key="45">
    <source>
        <dbReference type="PDB" id="6M22"/>
    </source>
</evidence>
<evidence type="ECO:0007829" key="46">
    <source>
        <dbReference type="PDB" id="7AIN"/>
    </source>
</evidence>
<dbReference type="EMBL" id="AF116242">
    <property type="protein sequence ID" value="AAF24986.1"/>
    <property type="molecule type" value="mRNA"/>
</dbReference>
<dbReference type="EMBL" id="AF108831">
    <property type="protein sequence ID" value="AAD25337.1"/>
    <property type="molecule type" value="mRNA"/>
</dbReference>
<dbReference type="EMBL" id="AF105366">
    <property type="protein sequence ID" value="AAD39742.1"/>
    <property type="molecule type" value="mRNA"/>
</dbReference>
<dbReference type="EMBL" id="AF314956">
    <property type="protein sequence ID" value="AAM96215.1"/>
    <property type="molecule type" value="Genomic_DNA"/>
</dbReference>
<dbReference type="EMBL" id="AF314931">
    <property type="protein sequence ID" value="AAM96215.1"/>
    <property type="status" value="JOINED"/>
    <property type="molecule type" value="Genomic_DNA"/>
</dbReference>
<dbReference type="EMBL" id="AF314933">
    <property type="protein sequence ID" value="AAM96215.1"/>
    <property type="status" value="JOINED"/>
    <property type="molecule type" value="Genomic_DNA"/>
</dbReference>
<dbReference type="EMBL" id="AF314934">
    <property type="protein sequence ID" value="AAM96215.1"/>
    <property type="status" value="JOINED"/>
    <property type="molecule type" value="Genomic_DNA"/>
</dbReference>
<dbReference type="EMBL" id="AF314935">
    <property type="protein sequence ID" value="AAM96215.1"/>
    <property type="status" value="JOINED"/>
    <property type="molecule type" value="Genomic_DNA"/>
</dbReference>
<dbReference type="EMBL" id="AF314936">
    <property type="protein sequence ID" value="AAM96215.1"/>
    <property type="status" value="JOINED"/>
    <property type="molecule type" value="Genomic_DNA"/>
</dbReference>
<dbReference type="EMBL" id="AF314937">
    <property type="protein sequence ID" value="AAM96215.1"/>
    <property type="status" value="JOINED"/>
    <property type="molecule type" value="Genomic_DNA"/>
</dbReference>
<dbReference type="EMBL" id="AF314938">
    <property type="protein sequence ID" value="AAM96215.1"/>
    <property type="status" value="JOINED"/>
    <property type="molecule type" value="Genomic_DNA"/>
</dbReference>
<dbReference type="EMBL" id="AF314939">
    <property type="protein sequence ID" value="AAM96215.1"/>
    <property type="status" value="JOINED"/>
    <property type="molecule type" value="Genomic_DNA"/>
</dbReference>
<dbReference type="EMBL" id="AF314940">
    <property type="protein sequence ID" value="AAM96215.1"/>
    <property type="status" value="JOINED"/>
    <property type="molecule type" value="Genomic_DNA"/>
</dbReference>
<dbReference type="EMBL" id="AF314941">
    <property type="protein sequence ID" value="AAM96215.1"/>
    <property type="status" value="JOINED"/>
    <property type="molecule type" value="Genomic_DNA"/>
</dbReference>
<dbReference type="EMBL" id="AF314942">
    <property type="protein sequence ID" value="AAM96215.1"/>
    <property type="status" value="JOINED"/>
    <property type="molecule type" value="Genomic_DNA"/>
</dbReference>
<dbReference type="EMBL" id="AF314943">
    <property type="protein sequence ID" value="AAM96215.1"/>
    <property type="status" value="JOINED"/>
    <property type="molecule type" value="Genomic_DNA"/>
</dbReference>
<dbReference type="EMBL" id="AF314944">
    <property type="protein sequence ID" value="AAM96215.1"/>
    <property type="status" value="JOINED"/>
    <property type="molecule type" value="Genomic_DNA"/>
</dbReference>
<dbReference type="EMBL" id="AF314945">
    <property type="protein sequence ID" value="AAM96215.1"/>
    <property type="status" value="JOINED"/>
    <property type="molecule type" value="Genomic_DNA"/>
</dbReference>
<dbReference type="EMBL" id="AF314946">
    <property type="protein sequence ID" value="AAM96215.1"/>
    <property type="status" value="JOINED"/>
    <property type="molecule type" value="Genomic_DNA"/>
</dbReference>
<dbReference type="EMBL" id="AF314947">
    <property type="protein sequence ID" value="AAM96215.1"/>
    <property type="status" value="JOINED"/>
    <property type="molecule type" value="Genomic_DNA"/>
</dbReference>
<dbReference type="EMBL" id="AF314948">
    <property type="protein sequence ID" value="AAM96215.1"/>
    <property type="status" value="JOINED"/>
    <property type="molecule type" value="Genomic_DNA"/>
</dbReference>
<dbReference type="EMBL" id="AF314949">
    <property type="protein sequence ID" value="AAM96215.1"/>
    <property type="status" value="JOINED"/>
    <property type="molecule type" value="Genomic_DNA"/>
</dbReference>
<dbReference type="EMBL" id="AF314950">
    <property type="protein sequence ID" value="AAM96215.1"/>
    <property type="status" value="JOINED"/>
    <property type="molecule type" value="Genomic_DNA"/>
</dbReference>
<dbReference type="EMBL" id="AF314951">
    <property type="protein sequence ID" value="AAM96215.1"/>
    <property type="status" value="JOINED"/>
    <property type="molecule type" value="Genomic_DNA"/>
</dbReference>
<dbReference type="EMBL" id="AF314952">
    <property type="protein sequence ID" value="AAM96215.1"/>
    <property type="status" value="JOINED"/>
    <property type="molecule type" value="Genomic_DNA"/>
</dbReference>
<dbReference type="EMBL" id="AF314953">
    <property type="protein sequence ID" value="AAM96215.1"/>
    <property type="status" value="JOINED"/>
    <property type="molecule type" value="Genomic_DNA"/>
</dbReference>
<dbReference type="EMBL" id="AF314954">
    <property type="protein sequence ID" value="AAM96215.1"/>
    <property type="status" value="JOINED"/>
    <property type="molecule type" value="Genomic_DNA"/>
</dbReference>
<dbReference type="EMBL" id="AF314955">
    <property type="protein sequence ID" value="AAM96215.1"/>
    <property type="status" value="JOINED"/>
    <property type="molecule type" value="Genomic_DNA"/>
</dbReference>
<dbReference type="EMBL" id="AF314956">
    <property type="protein sequence ID" value="AAM96216.1"/>
    <property type="molecule type" value="Genomic_DNA"/>
</dbReference>
<dbReference type="EMBL" id="AF314932">
    <property type="protein sequence ID" value="AAM96216.1"/>
    <property type="status" value="JOINED"/>
    <property type="molecule type" value="Genomic_DNA"/>
</dbReference>
<dbReference type="EMBL" id="AF314933">
    <property type="protein sequence ID" value="AAM96216.1"/>
    <property type="status" value="JOINED"/>
    <property type="molecule type" value="Genomic_DNA"/>
</dbReference>
<dbReference type="EMBL" id="AF314934">
    <property type="protein sequence ID" value="AAM96216.1"/>
    <property type="status" value="JOINED"/>
    <property type="molecule type" value="Genomic_DNA"/>
</dbReference>
<dbReference type="EMBL" id="AF314935">
    <property type="protein sequence ID" value="AAM96216.1"/>
    <property type="status" value="JOINED"/>
    <property type="molecule type" value="Genomic_DNA"/>
</dbReference>
<dbReference type="EMBL" id="AF314936">
    <property type="protein sequence ID" value="AAM96216.1"/>
    <property type="status" value="JOINED"/>
    <property type="molecule type" value="Genomic_DNA"/>
</dbReference>
<dbReference type="EMBL" id="AF314937">
    <property type="protein sequence ID" value="AAM96216.1"/>
    <property type="status" value="JOINED"/>
    <property type="molecule type" value="Genomic_DNA"/>
</dbReference>
<dbReference type="EMBL" id="AF314938">
    <property type="protein sequence ID" value="AAM96216.1"/>
    <property type="status" value="JOINED"/>
    <property type="molecule type" value="Genomic_DNA"/>
</dbReference>
<dbReference type="EMBL" id="AF314939">
    <property type="protein sequence ID" value="AAM96216.1"/>
    <property type="status" value="JOINED"/>
    <property type="molecule type" value="Genomic_DNA"/>
</dbReference>
<dbReference type="EMBL" id="AF314940">
    <property type="protein sequence ID" value="AAM96216.1"/>
    <property type="status" value="JOINED"/>
    <property type="molecule type" value="Genomic_DNA"/>
</dbReference>
<dbReference type="EMBL" id="AF314941">
    <property type="protein sequence ID" value="AAM96216.1"/>
    <property type="status" value="JOINED"/>
    <property type="molecule type" value="Genomic_DNA"/>
</dbReference>
<dbReference type="EMBL" id="AF314942">
    <property type="protein sequence ID" value="AAM96216.1"/>
    <property type="status" value="JOINED"/>
    <property type="molecule type" value="Genomic_DNA"/>
</dbReference>
<dbReference type="EMBL" id="AF314943">
    <property type="protein sequence ID" value="AAM96216.1"/>
    <property type="status" value="JOINED"/>
    <property type="molecule type" value="Genomic_DNA"/>
</dbReference>
<dbReference type="EMBL" id="AF314944">
    <property type="protein sequence ID" value="AAM96216.1"/>
    <property type="status" value="JOINED"/>
    <property type="molecule type" value="Genomic_DNA"/>
</dbReference>
<dbReference type="EMBL" id="AF314945">
    <property type="protein sequence ID" value="AAM96216.1"/>
    <property type="status" value="JOINED"/>
    <property type="molecule type" value="Genomic_DNA"/>
</dbReference>
<dbReference type="EMBL" id="AF314946">
    <property type="protein sequence ID" value="AAM96216.1"/>
    <property type="status" value="JOINED"/>
    <property type="molecule type" value="Genomic_DNA"/>
</dbReference>
<dbReference type="EMBL" id="AF314947">
    <property type="protein sequence ID" value="AAM96216.1"/>
    <property type="status" value="JOINED"/>
    <property type="molecule type" value="Genomic_DNA"/>
</dbReference>
<dbReference type="EMBL" id="AF314948">
    <property type="protein sequence ID" value="AAM96216.1"/>
    <property type="status" value="JOINED"/>
    <property type="molecule type" value="Genomic_DNA"/>
</dbReference>
<dbReference type="EMBL" id="AF314949">
    <property type="protein sequence ID" value="AAM96216.1"/>
    <property type="status" value="JOINED"/>
    <property type="molecule type" value="Genomic_DNA"/>
</dbReference>
<dbReference type="EMBL" id="AF314950">
    <property type="protein sequence ID" value="AAM96216.1"/>
    <property type="status" value="JOINED"/>
    <property type="molecule type" value="Genomic_DNA"/>
</dbReference>
<dbReference type="EMBL" id="AF314951">
    <property type="protein sequence ID" value="AAM96216.1"/>
    <property type="status" value="JOINED"/>
    <property type="molecule type" value="Genomic_DNA"/>
</dbReference>
<dbReference type="EMBL" id="AF314952">
    <property type="protein sequence ID" value="AAM96216.1"/>
    <property type="status" value="JOINED"/>
    <property type="molecule type" value="Genomic_DNA"/>
</dbReference>
<dbReference type="EMBL" id="AF314953">
    <property type="protein sequence ID" value="AAM96216.1"/>
    <property type="status" value="JOINED"/>
    <property type="molecule type" value="Genomic_DNA"/>
</dbReference>
<dbReference type="EMBL" id="AF314954">
    <property type="protein sequence ID" value="AAM96216.1"/>
    <property type="status" value="JOINED"/>
    <property type="molecule type" value="Genomic_DNA"/>
</dbReference>
<dbReference type="EMBL" id="AF314955">
    <property type="protein sequence ID" value="AAM96216.1"/>
    <property type="status" value="JOINED"/>
    <property type="molecule type" value="Genomic_DNA"/>
</dbReference>
<dbReference type="EMBL" id="AF531258">
    <property type="protein sequence ID" value="AAQ10026.1"/>
    <property type="molecule type" value="mRNA"/>
</dbReference>
<dbReference type="EMBL" id="AF531259">
    <property type="protein sequence ID" value="AAQ10027.1"/>
    <property type="molecule type" value="mRNA"/>
</dbReference>
<dbReference type="EMBL" id="AF531260">
    <property type="protein sequence ID" value="AAQ10028.1"/>
    <property type="molecule type" value="mRNA"/>
</dbReference>
<dbReference type="EMBL" id="DQ138323">
    <property type="protein sequence ID" value="ABA02873.1"/>
    <property type="molecule type" value="mRNA"/>
</dbReference>
<dbReference type="EMBL" id="AK315283">
    <property type="protein sequence ID" value="BAG37692.1"/>
    <property type="molecule type" value="mRNA"/>
</dbReference>
<dbReference type="EMBL" id="AC021822">
    <property type="status" value="NOT_ANNOTATED_CDS"/>
    <property type="molecule type" value="Genomic_DNA"/>
</dbReference>
<dbReference type="EMBL" id="AC079203">
    <property type="status" value="NOT_ANNOTATED_CDS"/>
    <property type="molecule type" value="Genomic_DNA"/>
</dbReference>
<dbReference type="EMBL" id="CH471125">
    <property type="protein sequence ID" value="EAW92295.1"/>
    <property type="molecule type" value="Genomic_DNA"/>
</dbReference>
<dbReference type="EMBL" id="CH471125">
    <property type="protein sequence ID" value="EAW92297.1"/>
    <property type="molecule type" value="Genomic_DNA"/>
</dbReference>
<dbReference type="EMBL" id="CH471125">
    <property type="protein sequence ID" value="EAW92301.1"/>
    <property type="molecule type" value="Genomic_DNA"/>
</dbReference>
<dbReference type="EMBL" id="BC126241">
    <property type="protein sequence ID" value="AAI26242.1"/>
    <property type="molecule type" value="mRNA"/>
</dbReference>
<dbReference type="EMBL" id="BC126243">
    <property type="protein sequence ID" value="AAI26244.1"/>
    <property type="molecule type" value="mRNA"/>
</dbReference>
<dbReference type="EMBL" id="AF477977">
    <property type="protein sequence ID" value="AAL85335.1"/>
    <property type="molecule type" value="mRNA"/>
</dbReference>
<dbReference type="EMBL" id="AL117500">
    <property type="protein sequence ID" value="CAB55965.1"/>
    <property type="molecule type" value="mRNA"/>
</dbReference>
<dbReference type="CCDS" id="CCDS10036.1">
    <molecule id="Q9UHW9-2"/>
</dbReference>
<dbReference type="CCDS" id="CCDS42010.1">
    <molecule id="Q9UHW9-3"/>
</dbReference>
<dbReference type="CCDS" id="CCDS42011.1">
    <molecule id="Q9UHW9-4"/>
</dbReference>
<dbReference type="CCDS" id="CCDS42012.1">
    <molecule id="Q9UHW9-5"/>
</dbReference>
<dbReference type="CCDS" id="CCDS58352.1">
    <molecule id="Q9UHW9-1"/>
</dbReference>
<dbReference type="PIR" id="T17275">
    <property type="entry name" value="T17275"/>
</dbReference>
<dbReference type="RefSeq" id="NP_001035959.1">
    <molecule id="Q9UHW9-5"/>
    <property type="nucleotide sequence ID" value="NM_001042494.2"/>
</dbReference>
<dbReference type="RefSeq" id="NP_001035960.1">
    <molecule id="Q9UHW9-5"/>
    <property type="nucleotide sequence ID" value="NM_001042495.2"/>
</dbReference>
<dbReference type="RefSeq" id="NP_001035961.1">
    <molecule id="Q9UHW9-4"/>
    <property type="nucleotide sequence ID" value="NM_001042496.2"/>
</dbReference>
<dbReference type="RefSeq" id="NP_001035962.1">
    <molecule id="Q9UHW9-3"/>
    <property type="nucleotide sequence ID" value="NM_001042497.2"/>
</dbReference>
<dbReference type="RefSeq" id="NP_001352017.1">
    <molecule id="Q9UHW9-1"/>
    <property type="nucleotide sequence ID" value="NM_001365088.1"/>
</dbReference>
<dbReference type="RefSeq" id="NP_005126.1">
    <molecule id="Q9UHW9-2"/>
    <property type="nucleotide sequence ID" value="NM_005135.2"/>
</dbReference>
<dbReference type="RefSeq" id="NP_598408.1">
    <molecule id="Q9UHW9-1"/>
    <property type="nucleotide sequence ID" value="NM_133647.2"/>
</dbReference>
<dbReference type="PDB" id="6M1Y">
    <property type="method" value="EM"/>
    <property type="resolution" value="3.20 A"/>
    <property type="chains" value="A/B=71-1150"/>
</dbReference>
<dbReference type="PDB" id="6M22">
    <property type="method" value="EM"/>
    <property type="resolution" value="2.70 A"/>
    <property type="chains" value="A/B=71-1150"/>
</dbReference>
<dbReference type="PDB" id="6Y5R">
    <property type="method" value="EM"/>
    <property type="resolution" value="3.76 A"/>
    <property type="chains" value="A/B=71-1150"/>
</dbReference>
<dbReference type="PDB" id="6Y5V">
    <property type="method" value="EM"/>
    <property type="resolution" value="4.08 A"/>
    <property type="chains" value="A/B=71-1150"/>
</dbReference>
<dbReference type="PDB" id="7AIN">
    <property type="method" value="EM"/>
    <property type="resolution" value="3.20 A"/>
    <property type="chains" value="A/B=71-1150"/>
</dbReference>
<dbReference type="PDB" id="7AIO">
    <property type="method" value="EM"/>
    <property type="resolution" value="3.31 A"/>
    <property type="chains" value="A/B=71-1150"/>
</dbReference>
<dbReference type="PDB" id="7D90">
    <property type="method" value="EM"/>
    <property type="resolution" value="3.60 A"/>
    <property type="chains" value="A/B=1-1150"/>
</dbReference>
<dbReference type="PDB" id="7NGB">
    <property type="method" value="EM"/>
    <property type="resolution" value="3.64 A"/>
    <property type="chains" value="A/B=71-1150"/>
</dbReference>
<dbReference type="PDBsum" id="6M1Y"/>
<dbReference type="PDBsum" id="6M22"/>
<dbReference type="PDBsum" id="6Y5R"/>
<dbReference type="PDBsum" id="6Y5V"/>
<dbReference type="PDBsum" id="7AIN"/>
<dbReference type="PDBsum" id="7AIO"/>
<dbReference type="PDBsum" id="7D90"/>
<dbReference type="PDBsum" id="7NGB"/>
<dbReference type="EMDB" id="EMD-10703"/>
<dbReference type="EMDB" id="EMD-10704"/>
<dbReference type="EMDB" id="EMD-11799"/>
<dbReference type="EMDB" id="EMD-11800"/>
<dbReference type="EMDB" id="EMD-11804"/>
<dbReference type="EMDB" id="EMD-11805"/>
<dbReference type="EMDB" id="EMD-12311"/>
<dbReference type="EMDB" id="EMD-30049"/>
<dbReference type="EMDB" id="EMD-30058"/>
<dbReference type="EMDB" id="EMD-30616"/>
<dbReference type="SMR" id="Q9UHW9"/>
<dbReference type="BioGRID" id="115311">
    <property type="interactions" value="135"/>
</dbReference>
<dbReference type="FunCoup" id="Q9UHW9">
    <property type="interactions" value="1859"/>
</dbReference>
<dbReference type="IntAct" id="Q9UHW9">
    <property type="interactions" value="56"/>
</dbReference>
<dbReference type="MINT" id="Q9UHW9"/>
<dbReference type="STRING" id="9606.ENSP00000346112"/>
<dbReference type="DrugBank" id="DB00761">
    <property type="generic name" value="Potassium chloride"/>
</dbReference>
<dbReference type="TCDB" id="2.A.30.1.15">
    <property type="family name" value="the cation-chloride cotransporter (ccc) family"/>
</dbReference>
<dbReference type="GlyConnect" id="1762">
    <property type="glycosylation" value="1 N-Linked glycan (1 site)"/>
</dbReference>
<dbReference type="GlyCosmos" id="Q9UHW9">
    <property type="glycosylation" value="4 sites, 1 glycan"/>
</dbReference>
<dbReference type="GlyGen" id="Q9UHW9">
    <property type="glycosylation" value="4 sites, 3 N-linked glycans (2 sites)"/>
</dbReference>
<dbReference type="iPTMnet" id="Q9UHW9"/>
<dbReference type="PhosphoSitePlus" id="Q9UHW9"/>
<dbReference type="BioMuta" id="SLC12A6"/>
<dbReference type="DMDM" id="27151690"/>
<dbReference type="jPOST" id="Q9UHW9"/>
<dbReference type="MassIVE" id="Q9UHW9"/>
<dbReference type="PaxDb" id="9606-ENSP00000346112"/>
<dbReference type="PeptideAtlas" id="Q9UHW9"/>
<dbReference type="ProteomicsDB" id="84422">
    <molecule id="Q9UHW9-1"/>
</dbReference>
<dbReference type="ProteomicsDB" id="84423">
    <molecule id="Q9UHW9-2"/>
</dbReference>
<dbReference type="ProteomicsDB" id="84424">
    <molecule id="Q9UHW9-3"/>
</dbReference>
<dbReference type="ProteomicsDB" id="84425">
    <molecule id="Q9UHW9-4"/>
</dbReference>
<dbReference type="ProteomicsDB" id="84426">
    <molecule id="Q9UHW9-5"/>
</dbReference>
<dbReference type="ProteomicsDB" id="84427">
    <molecule id="Q9UHW9-6"/>
</dbReference>
<dbReference type="Pumba" id="Q9UHW9"/>
<dbReference type="Antibodypedia" id="22708">
    <property type="antibodies" value="211 antibodies from 28 providers"/>
</dbReference>
<dbReference type="DNASU" id="9990"/>
<dbReference type="Ensembl" id="ENST00000290209.9">
    <molecule id="Q9UHW9-2"/>
    <property type="protein sequence ID" value="ENSP00000290209.5"/>
    <property type="gene ID" value="ENSG00000140199.13"/>
</dbReference>
<dbReference type="Ensembl" id="ENST00000354181.8">
    <molecule id="Q9UHW9-1"/>
    <property type="protein sequence ID" value="ENSP00000346112.3"/>
    <property type="gene ID" value="ENSG00000140199.13"/>
</dbReference>
<dbReference type="Ensembl" id="ENST00000397702.6">
    <molecule id="Q9UHW9-5"/>
    <property type="protein sequence ID" value="ENSP00000380814.2"/>
    <property type="gene ID" value="ENSG00000140199.13"/>
</dbReference>
<dbReference type="Ensembl" id="ENST00000397707.6">
    <molecule id="Q9UHW9-3"/>
    <property type="protein sequence ID" value="ENSP00000380819.2"/>
    <property type="gene ID" value="ENSG00000140199.13"/>
</dbReference>
<dbReference type="Ensembl" id="ENST00000458406.6">
    <molecule id="Q9UHW9-5"/>
    <property type="protein sequence ID" value="ENSP00000387725.2"/>
    <property type="gene ID" value="ENSG00000140199.13"/>
</dbReference>
<dbReference type="Ensembl" id="ENST00000558589.5">
    <molecule id="Q9UHW9-4"/>
    <property type="protein sequence ID" value="ENSP00000452776.1"/>
    <property type="gene ID" value="ENSG00000140199.13"/>
</dbReference>
<dbReference type="Ensembl" id="ENST00000558667.5">
    <molecule id="Q9UHW9-1"/>
    <property type="protein sequence ID" value="ENSP00000453473.1"/>
    <property type="gene ID" value="ENSG00000140199.13"/>
</dbReference>
<dbReference type="Ensembl" id="ENST00000560611.5">
    <molecule id="Q9UHW9-1"/>
    <property type="protein sequence ID" value="ENSP00000454168.1"/>
    <property type="gene ID" value="ENSG00000140199.13"/>
</dbReference>
<dbReference type="GeneID" id="9990"/>
<dbReference type="KEGG" id="hsa:9990"/>
<dbReference type="MANE-Select" id="ENST00000354181.8">
    <property type="protein sequence ID" value="ENSP00000346112.3"/>
    <property type="RefSeq nucleotide sequence ID" value="NM_001365088.1"/>
    <property type="RefSeq protein sequence ID" value="NP_001352017.1"/>
</dbReference>
<dbReference type="UCSC" id="uc001zhv.4">
    <molecule id="Q9UHW9-1"/>
    <property type="organism name" value="human"/>
</dbReference>
<dbReference type="AGR" id="HGNC:10914"/>
<dbReference type="CTD" id="9990"/>
<dbReference type="DisGeNET" id="9990"/>
<dbReference type="GeneCards" id="SLC12A6"/>
<dbReference type="GeneReviews" id="SLC12A6"/>
<dbReference type="HGNC" id="HGNC:10914">
    <property type="gene designation" value="SLC12A6"/>
</dbReference>
<dbReference type="HPA" id="ENSG00000140199">
    <property type="expression patterns" value="Low tissue specificity"/>
</dbReference>
<dbReference type="MalaCards" id="SLC12A6"/>
<dbReference type="MIM" id="218000">
    <property type="type" value="phenotype"/>
</dbReference>
<dbReference type="MIM" id="604878">
    <property type="type" value="gene"/>
</dbReference>
<dbReference type="MIM" id="620068">
    <property type="type" value="phenotype"/>
</dbReference>
<dbReference type="neXtProt" id="NX_Q9UHW9"/>
<dbReference type="OpenTargets" id="ENSG00000140199"/>
<dbReference type="Orphanet" id="1496">
    <property type="disease" value="Corpus callosum agenesis-neuronopathy syndrome"/>
</dbReference>
<dbReference type="PharmGKB" id="PA35808"/>
<dbReference type="VEuPathDB" id="HostDB:ENSG00000140199"/>
<dbReference type="eggNOG" id="KOG2082">
    <property type="taxonomic scope" value="Eukaryota"/>
</dbReference>
<dbReference type="GeneTree" id="ENSGT00940000160238"/>
<dbReference type="HOGENOM" id="CLU_001883_1_2_1"/>
<dbReference type="InParanoid" id="Q9UHW9"/>
<dbReference type="OMA" id="GDICARK"/>
<dbReference type="OrthoDB" id="2020542at2759"/>
<dbReference type="PAN-GO" id="Q9UHW9">
    <property type="GO annotations" value="8 GO annotations based on evolutionary models"/>
</dbReference>
<dbReference type="PhylomeDB" id="Q9UHW9"/>
<dbReference type="TreeFam" id="TF313657"/>
<dbReference type="PathwayCommons" id="Q9UHW9"/>
<dbReference type="Reactome" id="R-HSA-426117">
    <property type="pathway name" value="Cation-coupled Chloride cotransporters"/>
</dbReference>
<dbReference type="Reactome" id="R-HSA-5619039">
    <property type="pathway name" value="Defective SLC12A6 causes agenesis of the corpus callosum, with peripheral neuropathy (ACCPN)"/>
</dbReference>
<dbReference type="SignaLink" id="Q9UHW9"/>
<dbReference type="SIGNOR" id="Q9UHW9"/>
<dbReference type="BioGRID-ORCS" id="9990">
    <property type="hits" value="12 hits in 1163 CRISPR screens"/>
</dbReference>
<dbReference type="ChiTaRS" id="SLC12A6">
    <property type="organism name" value="human"/>
</dbReference>
<dbReference type="GeneWiki" id="SLC12A6"/>
<dbReference type="GenomeRNAi" id="9990"/>
<dbReference type="Pharos" id="Q9UHW9">
    <property type="development level" value="Tbio"/>
</dbReference>
<dbReference type="PRO" id="PR:Q9UHW9"/>
<dbReference type="Proteomes" id="UP000005640">
    <property type="component" value="Chromosome 15"/>
</dbReference>
<dbReference type="RNAct" id="Q9UHW9">
    <property type="molecule type" value="protein"/>
</dbReference>
<dbReference type="Bgee" id="ENSG00000140199">
    <property type="expression patterns" value="Expressed in esophagus squamous epithelium and 192 other cell types or tissues"/>
</dbReference>
<dbReference type="ExpressionAtlas" id="Q9UHW9">
    <property type="expression patterns" value="baseline and differential"/>
</dbReference>
<dbReference type="GO" id="GO:0030424">
    <property type="term" value="C:axon"/>
    <property type="evidence" value="ECO:0007669"/>
    <property type="project" value="Ensembl"/>
</dbReference>
<dbReference type="GO" id="GO:0016323">
    <property type="term" value="C:basolateral plasma membrane"/>
    <property type="evidence" value="ECO:0000250"/>
    <property type="project" value="UniProtKB"/>
</dbReference>
<dbReference type="GO" id="GO:0016020">
    <property type="term" value="C:membrane"/>
    <property type="evidence" value="ECO:0000303"/>
    <property type="project" value="UniProtKB"/>
</dbReference>
<dbReference type="GO" id="GO:0005886">
    <property type="term" value="C:plasma membrane"/>
    <property type="evidence" value="ECO:0000314"/>
    <property type="project" value="UniProt"/>
</dbReference>
<dbReference type="GO" id="GO:0045202">
    <property type="term" value="C:synapse"/>
    <property type="evidence" value="ECO:0007669"/>
    <property type="project" value="GOC"/>
</dbReference>
<dbReference type="GO" id="GO:0046872">
    <property type="term" value="F:metal ion binding"/>
    <property type="evidence" value="ECO:0007669"/>
    <property type="project" value="UniProtKB-KW"/>
</dbReference>
<dbReference type="GO" id="GO:0015079">
    <property type="term" value="F:potassium ion transmembrane transporter activity"/>
    <property type="evidence" value="ECO:0000314"/>
    <property type="project" value="ParkinsonsUK-UCL"/>
</dbReference>
<dbReference type="GO" id="GO:0015379">
    <property type="term" value="F:potassium:chloride symporter activity"/>
    <property type="evidence" value="ECO:0000314"/>
    <property type="project" value="UniProtKB"/>
</dbReference>
<dbReference type="GO" id="GO:0019901">
    <property type="term" value="F:protein kinase binding"/>
    <property type="evidence" value="ECO:0000353"/>
    <property type="project" value="ParkinsonsUK-UCL"/>
</dbReference>
<dbReference type="GO" id="GO:0001525">
    <property type="term" value="P:angiogenesis"/>
    <property type="evidence" value="ECO:0000303"/>
    <property type="project" value="UniProtKB"/>
</dbReference>
<dbReference type="GO" id="GO:0006884">
    <property type="term" value="P:cell volume homeostasis"/>
    <property type="evidence" value="ECO:0000314"/>
    <property type="project" value="UniProt"/>
</dbReference>
<dbReference type="GO" id="GO:0071476">
    <property type="term" value="P:cellular hypotonic response"/>
    <property type="evidence" value="ECO:0000315"/>
    <property type="project" value="ParkinsonsUK-UCL"/>
</dbReference>
<dbReference type="GO" id="GO:0071477">
    <property type="term" value="P:cellular hypotonic salinity response"/>
    <property type="evidence" value="ECO:0000314"/>
    <property type="project" value="UniProtKB"/>
</dbReference>
<dbReference type="GO" id="GO:0071333">
    <property type="term" value="P:cellular response to glucose stimulus"/>
    <property type="evidence" value="ECO:0007669"/>
    <property type="project" value="Ensembl"/>
</dbReference>
<dbReference type="GO" id="GO:0007268">
    <property type="term" value="P:chemical synaptic transmission"/>
    <property type="evidence" value="ECO:0000318"/>
    <property type="project" value="GO_Central"/>
</dbReference>
<dbReference type="GO" id="GO:0055064">
    <property type="term" value="P:chloride ion homeostasis"/>
    <property type="evidence" value="ECO:0000250"/>
    <property type="project" value="UniProtKB"/>
</dbReference>
<dbReference type="GO" id="GO:1902476">
    <property type="term" value="P:chloride transmembrane transport"/>
    <property type="evidence" value="ECO:0000318"/>
    <property type="project" value="GO_Central"/>
</dbReference>
<dbReference type="GO" id="GO:0006811">
    <property type="term" value="P:monoatomic ion transport"/>
    <property type="evidence" value="ECO:0000314"/>
    <property type="project" value="UniProtKB"/>
</dbReference>
<dbReference type="GO" id="GO:0055075">
    <property type="term" value="P:potassium ion homeostasis"/>
    <property type="evidence" value="ECO:0000250"/>
    <property type="project" value="UniProtKB"/>
</dbReference>
<dbReference type="GO" id="GO:1990573">
    <property type="term" value="P:potassium ion import across plasma membrane"/>
    <property type="evidence" value="ECO:0000314"/>
    <property type="project" value="ParkinsonsUK-UCL"/>
</dbReference>
<dbReference type="GO" id="GO:0071805">
    <property type="term" value="P:potassium ion transmembrane transport"/>
    <property type="evidence" value="ECO:0000314"/>
    <property type="project" value="UniProtKB"/>
</dbReference>
<dbReference type="FunFam" id="1.20.1740.10:FF:000049">
    <property type="entry name" value="Solute carrier family 12 (potassium/chloride transporter), member 4"/>
    <property type="match status" value="1"/>
</dbReference>
<dbReference type="FunFam" id="1.20.1740.10:FF:000040">
    <property type="entry name" value="Solute carrier family 12 member 6"/>
    <property type="match status" value="1"/>
</dbReference>
<dbReference type="Gene3D" id="1.20.1740.10">
    <property type="entry name" value="Amino acid/polyamine transporter I"/>
    <property type="match status" value="1"/>
</dbReference>
<dbReference type="InterPro" id="IPR004841">
    <property type="entry name" value="AA-permease/SLC12A_dom"/>
</dbReference>
<dbReference type="InterPro" id="IPR000076">
    <property type="entry name" value="KCL_cotranspt"/>
</dbReference>
<dbReference type="InterPro" id="IPR018491">
    <property type="entry name" value="SLC12_C"/>
</dbReference>
<dbReference type="InterPro" id="IPR004842">
    <property type="entry name" value="SLC12A_fam"/>
</dbReference>
<dbReference type="NCBIfam" id="TIGR00930">
    <property type="entry name" value="2a30"/>
    <property type="match status" value="1"/>
</dbReference>
<dbReference type="PANTHER" id="PTHR11827:SF66">
    <property type="entry name" value="SOLUTE CARRIER FAMILY 12 MEMBER 6"/>
    <property type="match status" value="1"/>
</dbReference>
<dbReference type="PANTHER" id="PTHR11827">
    <property type="entry name" value="SOLUTE CARRIER FAMILY 12, CATION COTRANSPORTERS"/>
    <property type="match status" value="1"/>
</dbReference>
<dbReference type="Pfam" id="PF00324">
    <property type="entry name" value="AA_permease"/>
    <property type="match status" value="2"/>
</dbReference>
<dbReference type="Pfam" id="PF03522">
    <property type="entry name" value="SLC12"/>
    <property type="match status" value="2"/>
</dbReference>
<dbReference type="PRINTS" id="PR01081">
    <property type="entry name" value="KCLTRNSPORT"/>
</dbReference>
<proteinExistence type="evidence at protein level"/>
<name>S12A6_HUMAN</name>
<comment type="function">
    <molecule>Isoform 1</molecule>
    <text evidence="5 6 8 11 12 14 15 30">Mediates electroneutral potassium-chloride cotransport when activated by cell swelling (PubMed:10600773, PubMed:11551954, PubMed:16048901, PubMed:18566107, PubMed:19665974, PubMed:21628467, PubMed:27485015). May contribute to cell volume homeostasis in single cells (PubMed:16048901, PubMed:27485015).</text>
</comment>
<comment type="function">
    <molecule>Isoform 2</molecule>
    <text evidence="8 17 19 30">Mediates electroneutral potassium-chloride cotransport when activated by cell swelling (PubMed:16048901, PubMed:33199848, PubMed:34031912). May contribute to cell volume homeostasis in single cells (Probable).</text>
</comment>
<comment type="function">
    <molecule>Isoform 3</molecule>
    <text evidence="8 30">Mediates electroneutral potassium-chloride cotransport when activated by cell swelling (PubMed:16048901). May contribute to cell volume homeostasis in single cells (Probable).</text>
</comment>
<comment type="function">
    <molecule>Isoform 4</molecule>
    <text evidence="8 30">Mediates electroneutral potassium-chloride cotransport when activated by cell swelling (PubMed:16048901). May contribute to cell volume homeostasis in single cells (Probable).</text>
</comment>
<comment type="function">
    <molecule>Isoform 5</molecule>
    <text evidence="8 30">Mediates electroneutral potassium-chloride cotransport when activated by cell swelling (PubMed:16048901). May contribute to cell volume homeostasis in single cells (Probable).</text>
</comment>
<comment type="function">
    <molecule>Isoform 6</molecule>
    <text evidence="8 30">Mediates electroneutral potassium-chloride cotransport when activated by cell swelling (PubMed:16048901). May contribute to cell volume homeostasis in single cells (Probable).</text>
</comment>
<comment type="catalytic activity">
    <molecule>Isoform 1</molecule>
    <reaction evidence="5 6 8">
        <text>K(+)(in) + chloride(in) = K(+)(out) + chloride(out)</text>
        <dbReference type="Rhea" id="RHEA:72427"/>
        <dbReference type="ChEBI" id="CHEBI:17996"/>
        <dbReference type="ChEBI" id="CHEBI:29103"/>
    </reaction>
</comment>
<comment type="catalytic activity">
    <molecule>Isoform 2</molecule>
    <reaction evidence="8 19">
        <text>K(+)(in) + chloride(in) = K(+)(out) + chloride(out)</text>
        <dbReference type="Rhea" id="RHEA:72427"/>
        <dbReference type="ChEBI" id="CHEBI:17996"/>
        <dbReference type="ChEBI" id="CHEBI:29103"/>
    </reaction>
</comment>
<comment type="catalytic activity">
    <molecule>Isoform 3</molecule>
    <reaction evidence="8">
        <text>K(+)(in) + chloride(in) = K(+)(out) + chloride(out)</text>
        <dbReference type="Rhea" id="RHEA:72427"/>
        <dbReference type="ChEBI" id="CHEBI:17996"/>
        <dbReference type="ChEBI" id="CHEBI:29103"/>
    </reaction>
</comment>
<comment type="catalytic activity">
    <molecule>Isoform 4</molecule>
    <reaction evidence="8">
        <text>K(+)(in) + chloride(in) = K(+)(out) + chloride(out)</text>
        <dbReference type="Rhea" id="RHEA:72427"/>
        <dbReference type="ChEBI" id="CHEBI:17996"/>
        <dbReference type="ChEBI" id="CHEBI:29103"/>
    </reaction>
</comment>
<comment type="catalytic activity">
    <molecule>Isoform 5</molecule>
    <reaction evidence="8">
        <text>K(+)(in) + chloride(in) = K(+)(out) + chloride(out)</text>
        <dbReference type="Rhea" id="RHEA:72427"/>
        <dbReference type="ChEBI" id="CHEBI:17996"/>
        <dbReference type="ChEBI" id="CHEBI:29103"/>
    </reaction>
</comment>
<comment type="catalytic activity">
    <molecule>Isoform 6</molecule>
    <reaction evidence="8">
        <text>K(+)(in) + chloride(in) = K(+)(out) + chloride(out)</text>
        <dbReference type="Rhea" id="RHEA:72427"/>
        <dbReference type="ChEBI" id="CHEBI:17996"/>
        <dbReference type="ChEBI" id="CHEBI:29103"/>
    </reaction>
</comment>
<comment type="activity regulation">
    <text evidence="5 12 13">Inhibited following phosphorylation by OXSR1/OSR1 and STK39/SPAK: phosphorylation takes place downstream of WNK kinases (WNK1, WNK2, WNK3 or WNK4) in response to hyperosmotic stress and subsequent cell shrinkage (PubMed:19665974, PubMed:21613606). Activated by N-ethylmaleimide (NEM) (PubMed:10600773). Inhibited by DIOA, bumetanide and furosemide (PubMed:10600773).</text>
</comment>
<comment type="biophysicochemical properties">
    <molecule>Isoform 2</molecule>
    <kinetics>
        <KM evidence="8">17.2 mM for extracellular Rb(+)</KM>
        <KM evidence="8">8.2 mM for extracellular Cl(-)</KM>
    </kinetics>
</comment>
<comment type="biophysicochemical properties">
    <molecule>Isoform 1</molecule>
    <kinetics>
        <KM evidence="5">9.5 mM for extracellular K(+)</KM>
        <KM evidence="5">51 mM for extracellular Cl(-)</KM>
        <KM evidence="8">10.7 mM for extracellular Rb(+)</KM>
        <KM evidence="8">7.3 mM for extracellular Cl(-)</KM>
    </kinetics>
</comment>
<comment type="subunit">
    <text evidence="11 14 17 18 19">Homodimer; adopts a domain-swap conformation at the scissor helices connecting the transmembrane domain and C-terminal domain (PubMed:21628467, PubMed:33199848, PubMed:33310850, PubMed:34031912). Heterodimer with K-Cl cotransporter SLC12A5 (PubMed:33310850). Interacts (via C-terminus) with CKB; the interaction may be required for potassium-chloride cotransport activity (PubMed:18566107).</text>
</comment>
<comment type="subcellular location">
    <subcellularLocation>
        <location evidence="7 10 11 12 14">Cell membrane</location>
        <topology evidence="2">Multi-pass membrane protein</topology>
    </subcellularLocation>
    <subcellularLocation>
        <location evidence="1">Basolateral cell membrane</location>
        <topology evidence="1">Multi-pass membrane protein</topology>
    </subcellularLocation>
</comment>
<comment type="alternative products">
    <event type="alternative promoter"/>
    <event type="alternative splicing"/>
    <isoform>
        <id>Q9UHW9-1</id>
        <name>1</name>
        <name evidence="27">KCC3a</name>
        <sequence type="displayed"/>
    </isoform>
    <isoform>
        <id>Q9UHW9-2</id>
        <name>2</name>
        <name evidence="27 28">KCC3b</name>
        <sequence type="described" ref="VSP_006115 VSP_006116"/>
    </isoform>
    <isoform>
        <id>Q9UHW9-3</id>
        <name>3</name>
        <name evidence="27">KCC3a-X2M</name>
        <sequence type="described" ref="VSP_041389"/>
    </isoform>
    <isoform>
        <id>Q9UHW9-4</id>
        <name>4</name>
        <name evidence="27">KCC3a-S3</name>
        <sequence type="described" ref="VSP_041388"/>
    </isoform>
    <isoform>
        <id>Q9UHW9-5</id>
        <name>5</name>
        <name evidence="27">KCC3a-S</name>
        <name>KCC3a-S1</name>
        <name>KCC3a-S2</name>
        <sequence type="described" ref="VSP_041387"/>
    </isoform>
    <isoform>
        <id>Q9UHW9-6</id>
        <name>6</name>
        <name evidence="27">KCC3b-X2M</name>
        <sequence type="described" ref="VSP_006115 VSP_006116 VSP_041389"/>
    </isoform>
</comment>
<comment type="tissue specificity">
    <text evidence="5 8 14">Expressed in brain (at protein level) (PubMed:21628467). Highly expressed in heart, brain and kidney. Detected at lower levels in skeletal muscle, placenta, lung and pancreas (PubMed:10600773). Detected in umbilical vein endothelial cells (PubMed:16048901).</text>
</comment>
<comment type="tissue specificity">
    <molecule>Isoform 2</molecule>
    <text evidence="8">More abundant in kidney.</text>
</comment>
<comment type="tissue specificity">
    <molecule>Isoform 5</molecule>
    <text evidence="8">Testis specific.</text>
</comment>
<comment type="induction">
    <text>Up-regulated by VEGF. Down-regulated by TNF.</text>
</comment>
<comment type="domain">
    <molecule>Isoform 2</molecule>
    <text evidence="17 19">N-terminal loop binds to the intracellular vestibule of the transporter, arresting the transporter in an inhibited state.</text>
</comment>
<comment type="PTM">
    <text evidence="12 13 19">Phosphorylated, phosphorylation regulates transporter activity (PubMed:19665974, PubMed:21613606, PubMed:34031912). Phosphorylated at Thr-991 and Thr-1048 by OXSR1/OSR1 and STK39/SPAK downstream of WNK kinases (WNK1, WNK2, WNK3 or WNK4), inhibiting the potassium-chloride cotransport activity (PubMed:19665974, PubMed:21613606).</text>
</comment>
<comment type="PTM">
    <text evidence="4 7">N-glycosylated.</text>
</comment>
<comment type="disease" evidence="7 9 10 11 14">
    <disease id="DI-00054">
        <name>Agenesis of the corpus callosum, with peripheral neuropathy</name>
        <acronym>ACCPN</acronym>
        <description>A disease that is characterized by severe progressive sensorimotor neuropathy, intellectual disability, dysmorphic features and complete or partial agenesis of the corpus callosum.</description>
        <dbReference type="MIM" id="218000"/>
    </disease>
    <text>The disease is caused by variants affecting the gene represented in this entry.</text>
</comment>
<comment type="disease" evidence="15 16 20">
    <disease id="DI-06520">
        <name>Charcot-Marie-Tooth disease, axonal, type 2II</name>
        <acronym>CMT2II</acronym>
        <description>A dominant axonal form of Charcot-Marie-Tooth disease, a disorder of the peripheral nervous system, characterized by progressive weakness and atrophy, initially of the peroneal muscles and later of the distal muscles of the arms. Charcot-Marie-Tooth disease is classified in two main groups on the basis of electrophysiologic properties and histopathology: primary peripheral demyelinating neuropathies (designated CMT1 when they are dominantly inherited) and primary peripheral axonal neuropathies (CMT2). Neuropathies of the CMT2 group are characterized by signs of axonal degeneration in the absence of obvious myelin alterations, normal or slightly reduced nerve conduction velocities, and progressive distal muscle weakness and atrophy.</description>
        <dbReference type="MIM" id="620068"/>
    </disease>
    <text>The disease is caused by variants affecting the gene represented in this entry.</text>
</comment>
<comment type="miscellaneous">
    <molecule>Isoform 2</molecule>
    <text evidence="29">Produced by alternative promoter usage.</text>
</comment>
<comment type="miscellaneous">
    <molecule>Isoform 3</molecule>
    <text evidence="29">Does not differ in the osmotic set point of swelling activation but, activation is more rapid.</text>
</comment>
<comment type="miscellaneous">
    <molecule>Isoform 5</molecule>
    <text evidence="29">Does not differ in the osmotic set point of swelling activation but, activation is more rapid.</text>
</comment>
<comment type="similarity">
    <text evidence="29">Belongs to the SLC12A transporter family. K/Cl co-transporter subfamily.</text>
</comment>
<sequence>MHPPETTTKMASVRFMVTPTKIDDIPGLSDTSPDLSSRSSSRVRFSSRESVPETSRSEPMSEMSGATTSLATVALDPPSDRTSHPQDVIEDLSQNSITGEHSQLLDDGHKKARNAYLNNSNYEEGDEYFDKNLALFEEEMDTRPKVSSLLNRMANYTNLTQGAKEHEEAENITEGKKKPTKTPQMGTFMGVYLPCLQNIFGVILFLRLTWVVGTAGVLQAFAIVLICCCCTMLTAISMSAIATNGVVPAGGSYFMISRALGPEFGGAVGLCFYLGTTFAAAMYILGAIEIFLVYIVPRAAIFHSDDALKESAAMLNNMRVYGTAFLVLMVLVVFIGVRYVNKFASLFLACVIVSILAIYAGAIKSSFAPPHFPVCMLGNRTLSSRHIDVCSKTKEINNMTVPSKLWGFFCNSSQFFNATCDEYFVHNNVTSIQGIPGLASGIITENLWSNYLPKGEIIEKPSAKSSDVLGSLNHEYVLVDITTSFTLLVGIFFPSVTGIMAGSNRSGDLKDAQKSIPIGTILAILTTSFVYLSNVVLFGACIEGVVLRDKFGDAVKGNLVVGTLSWPSPWVIVIGSFFSTCGAGLQSLTGAPRLLQAIAKDNIIPFLRVFGHSKANGEPTWALLLTAAIAELGILIASLDLVAPILSMFFLMCYLFVNLACALQTLLRTPNWRPRFRYYHWALSFMGMSICLALMFISSWYYAIVAMVIAGMIYKYIEYQGAEKEWGDGIRGLSLSAARFALLRLEEGPPHTKNWRPQLLVLLKLDEDLHVKHPRLLTFASQLKAGKGLTIVGSVIVGNFLENYGEALAAEQTIKHLMEAEKVKGFCQLVVAAKLREGISHLIQSCGLGGMKHNTVVMGWPNGWRQSEDARAWKTFIGTVRVTTAAHLALLVAKNISFFPSNVEQFSEGNIDVWWIVHDGGMLMLLPFLLKQHKVWRKCSIRIFTVAQLEDNSIQMKKDLATFLYHLRIEAEVEVVEMHDSDISAYTYERTLMMEQRSQMLRHMRLSKTERDREAQLVKDRNSMLRLTSIGSDEDEETETYQEKVHMTWTKDKYMASRGQKAKSMEGFQDLLNMRPDQSNVRRMHTAVKLNEVIVNKSHEAKLVLLNMPGPPRNPEGDENYMEFLEVLTEGLERVLLVRGGGSEVITIYS</sequence>
<reference key="1">
    <citation type="journal article" date="1999" name="Am. J. Physiol.">
        <title>Molecular cloning and functional characterization of KCC3, a new K-Cl cotransporter.</title>
        <authorList>
            <person name="Race J.E."/>
            <person name="Makhlouf F.N."/>
            <person name="Logue P.J."/>
            <person name="Wilson F.H."/>
            <person name="Dunham P.B."/>
            <person name="Holtzman E.J."/>
        </authorList>
    </citation>
    <scope>NUCLEOTIDE SEQUENCE [MRNA] (ISOFORM 1)</scope>
    <scope>TOPOLOGY</scope>
    <scope>FUNCTION</scope>
    <scope>ACTIVITY REGULATION</scope>
    <scope>TISSUE SPECIFICITY</scope>
    <scope>TRANSPORTER ACTIVITY</scope>
    <scope>BIOPHYSICOCHEMICAL PROPERTIES</scope>
    <source>
        <tissue>Placenta</tissue>
    </source>
</reference>
<reference key="2">
    <citation type="journal article" date="1999" name="J. Biol. Chem.">
        <title>Cloning, characterization, and chromosomal location of a novel human K+-Cl- cotransporter.</title>
        <authorList>
            <person name="Hiki K."/>
            <person name="D'Andrea R.J."/>
            <person name="Furze J."/>
            <person name="Crawford J."/>
            <person name="Woollatt E."/>
            <person name="Sutherland G.R."/>
            <person name="Vadas M.A."/>
            <person name="Gamble J.R."/>
        </authorList>
    </citation>
    <scope>NUCLEOTIDE SEQUENCE [MRNA] (ISOFORM 2)</scope>
    <scope>GLYCOSYLATION</scope>
    <scope>REGULATION BY VEGF AND TNF</scope>
    <source>
        <tissue>Umbilical vein</tissue>
    </source>
</reference>
<reference key="3">
    <citation type="journal article" date="1999" name="J. Biol. Chem.">
        <title>Cloning and characterization of KCC3 and KCC4, new members of the cation-chloride cotransporter gene family.</title>
        <authorList>
            <person name="Mount D.B."/>
            <person name="Mercado A."/>
            <person name="Song L."/>
            <person name="Xu J."/>
            <person name="George A.L. Jr."/>
            <person name="Delpire E."/>
            <person name="Gamba G."/>
        </authorList>
    </citation>
    <scope>NUCLEOTIDE SEQUENCE [MRNA] (ISOFORM 1)</scope>
</reference>
<reference key="4">
    <citation type="journal article" date="2002" name="Nat. Genet.">
        <title>The K-Cl cotransporter KCC3 is mutant in a severe peripheral neuropathy associated with agenesis of the corpus callosum.</title>
        <authorList>
            <person name="Howard H.C."/>
            <person name="Mount D.B."/>
            <person name="Rochefort D."/>
            <person name="Byun N."/>
            <person name="Dupre N."/>
            <person name="Lu J."/>
            <person name="Fan X."/>
            <person name="Song L."/>
            <person name="Riviere J.-B."/>
            <person name="Prevost C."/>
            <person name="Horst J."/>
            <person name="Simonati A."/>
            <person name="Lemcke B."/>
            <person name="Welch R."/>
            <person name="England R."/>
            <person name="Zhan F.Q."/>
            <person name="Mercado A."/>
            <person name="Siesser W.B."/>
            <person name="George A.L. Jr."/>
            <person name="McDonald M.P."/>
            <person name="Bouchard J.-P."/>
            <person name="Mathieu J."/>
            <person name="Delpire E."/>
            <person name="Rouleau G.A."/>
        </authorList>
    </citation>
    <scope>NUCLEOTIDE SEQUENCE [GENOMIC DNA]</scope>
    <scope>ALTERNATIVE SPLICING (ISOFORMS 1 AND 2)</scope>
    <scope>SUBCELLULAR LOCATION</scope>
    <scope>GLYCOSYLATION</scope>
    <scope>INVOLVEMENT IN ACCPN</scope>
    <scope>VARIANTS ACCPN 675-ARG--SER-1150 DEL AND 1011-ARG--SER-1150 DEL</scope>
</reference>
<reference key="5">
    <citation type="journal article" date="2005" name="Am. J. Physiol.">
        <title>NH2-terminal heterogeneity in the KCC3 K+-Cl- cotransporter.</title>
        <authorList>
            <person name="Mercado A."/>
            <person name="Vazquez N."/>
            <person name="Song L."/>
            <person name="Cortes R."/>
            <person name="Enck A.H."/>
            <person name="Welch R."/>
            <person name="Delpire E."/>
            <person name="Gamba G."/>
            <person name="Mount D.B."/>
        </authorList>
    </citation>
    <scope>NUCLEOTIDE SEQUENCE [MRNA] (ISOFORMS 3; 4; 5)</scope>
    <scope>ALTERNATIVE SPLICING (ISOFORM 6)</scope>
    <scope>ALTERNATIVE PROMOTER USAGE</scope>
    <scope>TISSUE SPECIFICITY</scope>
    <scope>BIOPHYSICOCHEMICAL PROPERTIES</scope>
    <scope>FUNCTION</scope>
    <scope>TRANSPORTER ACTIVITY</scope>
</reference>
<reference key="6">
    <citation type="journal article" date="2004" name="Nat. Genet.">
        <title>Complete sequencing and characterization of 21,243 full-length human cDNAs.</title>
        <authorList>
            <person name="Ota T."/>
            <person name="Suzuki Y."/>
            <person name="Nishikawa T."/>
            <person name="Otsuki T."/>
            <person name="Sugiyama T."/>
            <person name="Irie R."/>
            <person name="Wakamatsu A."/>
            <person name="Hayashi K."/>
            <person name="Sato H."/>
            <person name="Nagai K."/>
            <person name="Kimura K."/>
            <person name="Makita H."/>
            <person name="Sekine M."/>
            <person name="Obayashi M."/>
            <person name="Nishi T."/>
            <person name="Shibahara T."/>
            <person name="Tanaka T."/>
            <person name="Ishii S."/>
            <person name="Yamamoto J."/>
            <person name="Saito K."/>
            <person name="Kawai Y."/>
            <person name="Isono Y."/>
            <person name="Nakamura Y."/>
            <person name="Nagahari K."/>
            <person name="Murakami K."/>
            <person name="Yasuda T."/>
            <person name="Iwayanagi T."/>
            <person name="Wagatsuma M."/>
            <person name="Shiratori A."/>
            <person name="Sudo H."/>
            <person name="Hosoiri T."/>
            <person name="Kaku Y."/>
            <person name="Kodaira H."/>
            <person name="Kondo H."/>
            <person name="Sugawara M."/>
            <person name="Takahashi M."/>
            <person name="Kanda K."/>
            <person name="Yokoi T."/>
            <person name="Furuya T."/>
            <person name="Kikkawa E."/>
            <person name="Omura Y."/>
            <person name="Abe K."/>
            <person name="Kamihara K."/>
            <person name="Katsuta N."/>
            <person name="Sato K."/>
            <person name="Tanikawa M."/>
            <person name="Yamazaki M."/>
            <person name="Ninomiya K."/>
            <person name="Ishibashi T."/>
            <person name="Yamashita H."/>
            <person name="Murakawa K."/>
            <person name="Fujimori K."/>
            <person name="Tanai H."/>
            <person name="Kimata M."/>
            <person name="Watanabe M."/>
            <person name="Hiraoka S."/>
            <person name="Chiba Y."/>
            <person name="Ishida S."/>
            <person name="Ono Y."/>
            <person name="Takiguchi S."/>
            <person name="Watanabe S."/>
            <person name="Yosida M."/>
            <person name="Hotuta T."/>
            <person name="Kusano J."/>
            <person name="Kanehori K."/>
            <person name="Takahashi-Fujii A."/>
            <person name="Hara H."/>
            <person name="Tanase T.-O."/>
            <person name="Nomura Y."/>
            <person name="Togiya S."/>
            <person name="Komai F."/>
            <person name="Hara R."/>
            <person name="Takeuchi K."/>
            <person name="Arita M."/>
            <person name="Imose N."/>
            <person name="Musashino K."/>
            <person name="Yuuki H."/>
            <person name="Oshima A."/>
            <person name="Sasaki N."/>
            <person name="Aotsuka S."/>
            <person name="Yoshikawa Y."/>
            <person name="Matsunawa H."/>
            <person name="Ichihara T."/>
            <person name="Shiohata N."/>
            <person name="Sano S."/>
            <person name="Moriya S."/>
            <person name="Momiyama H."/>
            <person name="Satoh N."/>
            <person name="Takami S."/>
            <person name="Terashima Y."/>
            <person name="Suzuki O."/>
            <person name="Nakagawa S."/>
            <person name="Senoh A."/>
            <person name="Mizoguchi H."/>
            <person name="Goto Y."/>
            <person name="Shimizu F."/>
            <person name="Wakebe H."/>
            <person name="Hishigaki H."/>
            <person name="Watanabe T."/>
            <person name="Sugiyama A."/>
            <person name="Takemoto M."/>
            <person name="Kawakami B."/>
            <person name="Yamazaki M."/>
            <person name="Watanabe K."/>
            <person name="Kumagai A."/>
            <person name="Itakura S."/>
            <person name="Fukuzumi Y."/>
            <person name="Fujimori Y."/>
            <person name="Komiyama M."/>
            <person name="Tashiro H."/>
            <person name="Tanigami A."/>
            <person name="Fujiwara T."/>
            <person name="Ono T."/>
            <person name="Yamada K."/>
            <person name="Fujii Y."/>
            <person name="Ozaki K."/>
            <person name="Hirao M."/>
            <person name="Ohmori Y."/>
            <person name="Kawabata A."/>
            <person name="Hikiji T."/>
            <person name="Kobatake N."/>
            <person name="Inagaki H."/>
            <person name="Ikema Y."/>
            <person name="Okamoto S."/>
            <person name="Okitani R."/>
            <person name="Kawakami T."/>
            <person name="Noguchi S."/>
            <person name="Itoh T."/>
            <person name="Shigeta K."/>
            <person name="Senba T."/>
            <person name="Matsumura K."/>
            <person name="Nakajima Y."/>
            <person name="Mizuno T."/>
            <person name="Morinaga M."/>
            <person name="Sasaki M."/>
            <person name="Togashi T."/>
            <person name="Oyama M."/>
            <person name="Hata H."/>
            <person name="Watanabe M."/>
            <person name="Komatsu T."/>
            <person name="Mizushima-Sugano J."/>
            <person name="Satoh T."/>
            <person name="Shirai Y."/>
            <person name="Takahashi Y."/>
            <person name="Nakagawa K."/>
            <person name="Okumura K."/>
            <person name="Nagase T."/>
            <person name="Nomura N."/>
            <person name="Kikuchi H."/>
            <person name="Masuho Y."/>
            <person name="Yamashita R."/>
            <person name="Nakai K."/>
            <person name="Yada T."/>
            <person name="Nakamura Y."/>
            <person name="Ohara O."/>
            <person name="Isogai T."/>
            <person name="Sugano S."/>
        </authorList>
    </citation>
    <scope>NUCLEOTIDE SEQUENCE [LARGE SCALE MRNA] (ISOFORM 2)</scope>
    <source>
        <tissue>Uterus</tissue>
    </source>
</reference>
<reference key="7">
    <citation type="journal article" date="2006" name="Nature">
        <title>Analysis of the DNA sequence and duplication history of human chromosome 15.</title>
        <authorList>
            <person name="Zody M.C."/>
            <person name="Garber M."/>
            <person name="Sharpe T."/>
            <person name="Young S.K."/>
            <person name="Rowen L."/>
            <person name="O'Neill K."/>
            <person name="Whittaker C.A."/>
            <person name="Kamal M."/>
            <person name="Chang J.L."/>
            <person name="Cuomo C.A."/>
            <person name="Dewar K."/>
            <person name="FitzGerald M.G."/>
            <person name="Kodira C.D."/>
            <person name="Madan A."/>
            <person name="Qin S."/>
            <person name="Yang X."/>
            <person name="Abbasi N."/>
            <person name="Abouelleil A."/>
            <person name="Arachchi H.M."/>
            <person name="Baradarani L."/>
            <person name="Birditt B."/>
            <person name="Bloom S."/>
            <person name="Bloom T."/>
            <person name="Borowsky M.L."/>
            <person name="Burke J."/>
            <person name="Butler J."/>
            <person name="Cook A."/>
            <person name="DeArellano K."/>
            <person name="DeCaprio D."/>
            <person name="Dorris L. III"/>
            <person name="Dors M."/>
            <person name="Eichler E.E."/>
            <person name="Engels R."/>
            <person name="Fahey J."/>
            <person name="Fleetwood P."/>
            <person name="Friedman C."/>
            <person name="Gearin G."/>
            <person name="Hall J.L."/>
            <person name="Hensley G."/>
            <person name="Johnson E."/>
            <person name="Jones C."/>
            <person name="Kamat A."/>
            <person name="Kaur A."/>
            <person name="Locke D.P."/>
            <person name="Madan A."/>
            <person name="Munson G."/>
            <person name="Jaffe D.B."/>
            <person name="Lui A."/>
            <person name="Macdonald P."/>
            <person name="Mauceli E."/>
            <person name="Naylor J.W."/>
            <person name="Nesbitt R."/>
            <person name="Nicol R."/>
            <person name="O'Leary S.B."/>
            <person name="Ratcliffe A."/>
            <person name="Rounsley S."/>
            <person name="She X."/>
            <person name="Sneddon K.M.B."/>
            <person name="Stewart S."/>
            <person name="Sougnez C."/>
            <person name="Stone S.M."/>
            <person name="Topham K."/>
            <person name="Vincent D."/>
            <person name="Wang S."/>
            <person name="Zimmer A.R."/>
            <person name="Birren B.W."/>
            <person name="Hood L."/>
            <person name="Lander E.S."/>
            <person name="Nusbaum C."/>
        </authorList>
    </citation>
    <scope>NUCLEOTIDE SEQUENCE [LARGE SCALE GENOMIC DNA]</scope>
</reference>
<reference key="8">
    <citation type="submission" date="2005-07" db="EMBL/GenBank/DDBJ databases">
        <authorList>
            <person name="Mural R.J."/>
            <person name="Istrail S."/>
            <person name="Sutton G.G."/>
            <person name="Florea L."/>
            <person name="Halpern A.L."/>
            <person name="Mobarry C.M."/>
            <person name="Lippert R."/>
            <person name="Walenz B."/>
            <person name="Shatkay H."/>
            <person name="Dew I."/>
            <person name="Miller J.R."/>
            <person name="Flanigan M.J."/>
            <person name="Edwards N.J."/>
            <person name="Bolanos R."/>
            <person name="Fasulo D."/>
            <person name="Halldorsson B.V."/>
            <person name="Hannenhalli S."/>
            <person name="Turner R."/>
            <person name="Yooseph S."/>
            <person name="Lu F."/>
            <person name="Nusskern D.R."/>
            <person name="Shue B.C."/>
            <person name="Zheng X.H."/>
            <person name="Zhong F."/>
            <person name="Delcher A.L."/>
            <person name="Huson D.H."/>
            <person name="Kravitz S.A."/>
            <person name="Mouchard L."/>
            <person name="Reinert K."/>
            <person name="Remington K.A."/>
            <person name="Clark A.G."/>
            <person name="Waterman M.S."/>
            <person name="Eichler E.E."/>
            <person name="Adams M.D."/>
            <person name="Hunkapiller M.W."/>
            <person name="Myers E.W."/>
            <person name="Venter J.C."/>
        </authorList>
    </citation>
    <scope>NUCLEOTIDE SEQUENCE [LARGE SCALE GENOMIC DNA]</scope>
</reference>
<reference key="9">
    <citation type="journal article" date="2004" name="Genome Res.">
        <title>The status, quality, and expansion of the NIH full-length cDNA project: the Mammalian Gene Collection (MGC).</title>
        <authorList>
            <consortium name="The MGC Project Team"/>
        </authorList>
    </citation>
    <scope>NUCLEOTIDE SEQUENCE [LARGE SCALE MRNA] (ISOFORM 2)</scope>
    <source>
        <tissue>Brain</tissue>
    </source>
</reference>
<reference key="10">
    <citation type="submission" date="2002-01" db="EMBL/GenBank/DDBJ databases">
        <authorList>
            <person name="Guo J.H."/>
            <person name="Yu L."/>
        </authorList>
    </citation>
    <scope>NUCLEOTIDE SEQUENCE [LARGE SCALE MRNA] OF 70-1150 (ISOFORM 1)</scope>
    <source>
        <tissue>Testis</tissue>
    </source>
</reference>
<reference key="11">
    <citation type="journal article" date="2007" name="BMC Genomics">
        <title>The full-ORF clone resource of the German cDNA consortium.</title>
        <authorList>
            <person name="Bechtel S."/>
            <person name="Rosenfelder H."/>
            <person name="Duda A."/>
            <person name="Schmidt C.P."/>
            <person name="Ernst U."/>
            <person name="Wellenreuther R."/>
            <person name="Mehrle A."/>
            <person name="Schuster C."/>
            <person name="Bahr A."/>
            <person name="Bloecker H."/>
            <person name="Heubner D."/>
            <person name="Hoerlein A."/>
            <person name="Michel G."/>
            <person name="Wedler H."/>
            <person name="Koehrer K."/>
            <person name="Ottenwaelder B."/>
            <person name="Poustka A."/>
            <person name="Wiemann S."/>
            <person name="Schupp I."/>
        </authorList>
    </citation>
    <scope>NUCLEOTIDE SEQUENCE [LARGE SCALE MRNA] OF 137-1150 (ISOFORM 1)</scope>
    <source>
        <tissue>Testis</tissue>
    </source>
</reference>
<reference key="12">
    <citation type="journal article" date="2001" name="J. Biol. Chem.">
        <title>A dominant negative mutant of the KCC1 K-Cl cotransporter: both N- and C-terminal cytoplasmic domains are required for K-Cl cotransport activity.</title>
        <authorList>
            <person name="Casula S."/>
            <person name="Shmukler B.E."/>
            <person name="Wilhelm S."/>
            <person name="Stuart-Tilley A.K."/>
            <person name="Su W."/>
            <person name="Chernova M.N."/>
            <person name="Brugnara C."/>
            <person name="Alper S.L."/>
        </authorList>
    </citation>
    <scope>SUBUNIT</scope>
    <scope>FUNCTION</scope>
    <scope>TRANSPORTER ACTIVITY</scope>
</reference>
<reference key="13">
    <citation type="journal article" date="2008" name="Proc. Natl. Acad. Sci. U.S.A.">
        <title>A quantitative atlas of mitotic phosphorylation.</title>
        <authorList>
            <person name="Dephoure N."/>
            <person name="Zhou C."/>
            <person name="Villen J."/>
            <person name="Beausoleil S.A."/>
            <person name="Bakalarski C.E."/>
            <person name="Elledge S.J."/>
            <person name="Gygi S.P."/>
        </authorList>
    </citation>
    <scope>PHOSPHORYLATION [LARGE SCALE ANALYSIS] AT SER-1032</scope>
    <scope>IDENTIFICATION BY MASS SPECTROMETRY [LARGE SCALE ANALYSIS]</scope>
    <source>
        <tissue>Cervix carcinoma</tissue>
    </source>
</reference>
<reference key="14">
    <citation type="journal article" date="2009" name="Cell">
        <title>Sites of regulated phosphorylation that control K-Cl cotransporter activity.</title>
        <authorList>
            <person name="Rinehart J."/>
            <person name="Maksimova Y.D."/>
            <person name="Tanis J.E."/>
            <person name="Stone K.L."/>
            <person name="Hodson C.A."/>
            <person name="Zhang J."/>
            <person name="Risinger M."/>
            <person name="Pan W."/>
            <person name="Wu D."/>
            <person name="Colangelo C.M."/>
            <person name="Forbush B."/>
            <person name="Joiner C.H."/>
            <person name="Gulcicek E.E."/>
            <person name="Gallagher P.G."/>
            <person name="Lifton R.P."/>
        </authorList>
    </citation>
    <scope>FUNCTION</scope>
    <scope>ACTIVITY REGULATION</scope>
    <scope>SUBCELLULAR LOCATION</scope>
    <scope>PHOSPHORYLATION AT SER-32; THR-991; SER-1023; SER-1029 AND THR-1048</scope>
    <scope>MUTAGENESIS OF THR-991; SER-1032 AND THR-1048</scope>
</reference>
<reference key="15">
    <citation type="journal article" date="2009" name="Sci. Signal.">
        <title>Quantitative phosphoproteomic analysis of T cell receptor signaling reveals system-wide modulation of protein-protein interactions.</title>
        <authorList>
            <person name="Mayya V."/>
            <person name="Lundgren D.H."/>
            <person name="Hwang S.-I."/>
            <person name="Rezaul K."/>
            <person name="Wu L."/>
            <person name="Eng J.K."/>
            <person name="Rodionov V."/>
            <person name="Han D.K."/>
        </authorList>
    </citation>
    <scope>PHOSPHORYLATION [LARGE SCALE ANALYSIS] AT SER-32</scope>
    <scope>IDENTIFICATION BY MASS SPECTROMETRY [LARGE SCALE ANALYSIS]</scope>
    <source>
        <tissue>Leukemic T-cell</tissue>
    </source>
</reference>
<reference key="16">
    <citation type="journal article" date="2011" name="Am. J. Physiol.">
        <title>Similar Effects of all WNK3 Variants upon SLC12 Cotransporters.</title>
        <authorList>
            <person name="Cruz-Rangel S."/>
            <person name="Melo Z."/>
            <person name="Vazquez N."/>
            <person name="Meade P."/>
            <person name="Bobadilla N.A."/>
            <person name="Pasantes-Morales H."/>
            <person name="Gamba G."/>
            <person name="Mercado A."/>
        </authorList>
    </citation>
    <scope>ACTIVITY REGULATION</scope>
</reference>
<reference key="17">
    <citation type="journal article" date="2011" name="Sci. Signal.">
        <title>System-wide temporal characterization of the proteome and phosphoproteome of human embryonic stem cell differentiation.</title>
        <authorList>
            <person name="Rigbolt K.T."/>
            <person name="Prokhorova T.A."/>
            <person name="Akimov V."/>
            <person name="Henningsen J."/>
            <person name="Johansen P.T."/>
            <person name="Kratchmarova I."/>
            <person name="Kassem M."/>
            <person name="Mann M."/>
            <person name="Olsen J.V."/>
            <person name="Blagoev B."/>
        </authorList>
    </citation>
    <scope>PHOSPHORYLATION [LARGE SCALE ANALYSIS] AT SER-1032</scope>
    <scope>IDENTIFICATION BY MASS SPECTROMETRY [LARGE SCALE ANALYSIS]</scope>
</reference>
<reference key="18">
    <citation type="journal article" date="2013" name="J. Proteome Res.">
        <title>Toward a comprehensive characterization of a human cancer cell phosphoproteome.</title>
        <authorList>
            <person name="Zhou H."/>
            <person name="Di Palma S."/>
            <person name="Preisinger C."/>
            <person name="Peng M."/>
            <person name="Polat A.N."/>
            <person name="Heck A.J."/>
            <person name="Mohammed S."/>
        </authorList>
    </citation>
    <scope>PHOSPHORYLATION [LARGE SCALE ANALYSIS] AT SER-32; SER-120; SER-148 AND SER-1032</scope>
    <scope>IDENTIFICATION BY MASS SPECTROMETRY [LARGE SCALE ANALYSIS]</scope>
    <source>
        <tissue>Cervix carcinoma</tissue>
        <tissue>Erythroleukemia</tissue>
    </source>
</reference>
<reference key="19">
    <citation type="journal article" date="2022" name="Proc. Natl. Acad. Sci. U.S.A.">
        <title>Structure of the human cation-chloride cotransport KCC1 in an outward-open state.</title>
        <authorList>
            <person name="Zhao Y."/>
            <person name="Shen J."/>
            <person name="Wang Q."/>
            <person name="Ruiz Munevar M.J."/>
            <person name="Vidossich P."/>
            <person name="De Vivo M."/>
            <person name="Zhou M."/>
            <person name="Cao E."/>
        </authorList>
    </citation>
    <scope>MUTAGENESIS OF ARG-505 AND GLN-586</scope>
</reference>
<reference evidence="38" key="20">
    <citation type="journal article" date="2020" name="Sci. Adv.">
        <title>Structures and an activation mechanism of human potassium-chloride cotransporters.</title>
        <authorList>
            <person name="Xie Y."/>
            <person name="Chang S."/>
            <person name="Zhao C."/>
            <person name="Wang F."/>
            <person name="Liu S."/>
            <person name="Wang J."/>
            <person name="Delpire E."/>
            <person name="Ye S."/>
            <person name="Guo J."/>
        </authorList>
    </citation>
    <scope>STRUCTURE BY ELECTRON MICROSCOPY (3.60 ANGSTROMS) OF 183-1146 OF ISOFORM 1</scope>
    <scope>SUBUNIT</scope>
    <scope>DISULFIDE BONDS</scope>
</reference>
<reference evidence="32 33" key="21">
    <citation type="journal article" date="2021" name="Cell Res.">
        <title>Cryo-EM structures of the full-length human KCC2 and KCC3 cation-chloride cotransporters.</title>
        <authorList>
            <person name="Chi X."/>
            <person name="Li X."/>
            <person name="Chen Y."/>
            <person name="Zhang Y."/>
            <person name="Su Q."/>
            <person name="Zhou Q."/>
        </authorList>
    </citation>
    <scope>STRUCTURE BY ELECTRON MICROSCOPY (2.70 ANGSTROMS) OF 71-1150 IN COMPLEX WITH POTASSIUM AND CHLORIDE</scope>
    <scope>FUNCTION (ISOFORM 2)</scope>
    <scope>SUBUNIT</scope>
    <scope>MUTAGENESIS OF ARG-668; LYS-715 AND GLU-746</scope>
    <scope>DOMAIN</scope>
</reference>
<reference key="22">
    <citation type="journal article" date="2021" name="Cell Res.">
        <title>Author Correction: Cryo-EM structures of the full-length human KCC2 and KCC3 cation-chloride cotransporters.</title>
        <authorList>
            <person name="Chi X."/>
            <person name="Li X."/>
            <person name="Chen Y."/>
            <person name="Zhang Y."/>
            <person name="Su Q."/>
            <person name="Zhou Q."/>
        </authorList>
    </citation>
    <scope>ERRATUM OF PUBMED:33199848</scope>
</reference>
<reference evidence="34 35 36 37 39" key="23">
    <citation type="journal article" date="2021" name="EMBO J.">
        <title>Phospho-regulation, nucleotide binding and ion access control in potassium-chloride cotransporters.</title>
        <authorList>
            <person name="Chi G."/>
            <person name="Ebenhoch R."/>
            <person name="Man H."/>
            <person name="Tang H."/>
            <person name="Tremblay L.E."/>
            <person name="Reggiano G."/>
            <person name="Qiu X."/>
            <person name="Bohstedt T."/>
            <person name="Liko I."/>
            <person name="Almeida F.G."/>
            <person name="Garneau A.P."/>
            <person name="Wang D."/>
            <person name="McKinley G."/>
            <person name="Moreau C.P."/>
            <person name="Bountra K.D."/>
            <person name="Abrusci P."/>
            <person name="Mukhopadhyay S.M.M."/>
            <person name="Fernandez-Cid A."/>
            <person name="Slimani S."/>
            <person name="Lavoie J.L."/>
            <person name="Burgess-Brown N.A."/>
            <person name="Tehan B."/>
            <person name="DiMaio F."/>
            <person name="Jazayeri A."/>
            <person name="Isenring P."/>
            <person name="Robinson C.V."/>
            <person name="Duerr K.L."/>
        </authorList>
    </citation>
    <scope>STRUCTURE BY ELECTRON MICROSCOPY (3.20 ANGSTROMS) OF WILD-TYPE AND MUTANT ASP-96/ASP-991/ASP-1048 OF ISOFORM 2</scope>
    <scope>FUNCTION (ISOFORM 2)</scope>
    <scope>TRANSPORTER ACTIVITY (ISOFORM 2)</scope>
    <scope>SUBUNIT</scope>
    <scope>MUTAGENESIS OF SER-96; THR-991 AND THR-1048</scope>
    <scope>PHOSPHORYLATION AT SER-736; THR-778; SER-981; THR-991 AND TYR-1121</scope>
    <scope>DOMAIN</scope>
</reference>
<reference key="24">
    <citation type="journal article" date="2006" name="Neurology">
        <title>Novel truncating and missense mutations of the KCC3 gene associated with Andermann syndrome.</title>
        <authorList>
            <person name="Uyanik G."/>
            <person name="Elcioglu N."/>
            <person name="Penzien J."/>
            <person name="Gross C."/>
            <person name="Yilmaz Y."/>
            <person name="Olmez A."/>
            <person name="Demir E."/>
            <person name="Wahl D."/>
            <person name="Scheglmann K."/>
            <person name="Winner B."/>
            <person name="Bogdahn U."/>
            <person name="Topaloglu H."/>
            <person name="Hehr U."/>
            <person name="Winkler J."/>
        </authorList>
    </citation>
    <scope>VARIANT ACCPN CYS-207</scope>
</reference>
<reference key="25">
    <citation type="journal article" date="2007" name="Neurology">
        <title>Distal truncation of KCC3 in non-French Canadian HMSN/ACC families.</title>
        <authorList>
            <person name="Salin-Cantegrel A."/>
            <person name="Riviere J.B."/>
            <person name="Dupre N."/>
            <person name="Charron F.M."/>
            <person name="Shekarabi M."/>
            <person name="Karemera L."/>
            <person name="Gaspar C."/>
            <person name="Horst J."/>
            <person name="Tekin M."/>
            <person name="Deda G."/>
            <person name="Krause A."/>
            <person name="Lippert M.M."/>
            <person name="Willemsen M.A."/>
            <person name="Jarrar R."/>
            <person name="Lapointe J.Y."/>
            <person name="Rouleau G.A."/>
        </authorList>
    </citation>
    <scope>VARIANTS ACCPN 1011-ARG--SER-1150 DEL AND 1015-ALA--SER-1150 DEL</scope>
    <scope>CHARACTERIZATION OF VARIANT ACCPN 1011-ARG--SER-1150 DEL</scope>
    <scope>SUBCELLULAR LOCATION</scope>
</reference>
<reference key="26">
    <citation type="journal article" date="2008" name="Hum. Mol. Genet.">
        <title>HMSN/ACC truncation mutations disrupt brain-type creatine kinase-dependant activation of K+/Cl- co-transporter 3.</title>
        <authorList>
            <person name="Salin-Cantegrel A."/>
            <person name="Shekarabi M."/>
            <person name="Holbert S."/>
            <person name="Dion P."/>
            <person name="Rochefort D."/>
            <person name="Laganiere J."/>
            <person name="Dacal S."/>
            <person name="Hince P."/>
            <person name="Karemera L."/>
            <person name="Gaspar C."/>
            <person name="Lapointe J.Y."/>
            <person name="Rouleau G.A."/>
        </authorList>
    </citation>
    <scope>CHARACTERIZATION OF VARIANT ACCPN 1011-ARG--SER-1150 DEL</scope>
    <scope>FUNCTION</scope>
    <scope>INTERACTION WITH CKB</scope>
    <scope>SUBCELLULAR LOCATION</scope>
</reference>
<reference key="27">
    <citation type="journal article" date="2011" name="J. Biol. Chem.">
        <title>Transit defect of potassium-chloride Co-transporter 3 is a major pathogenic mechanism in hereditary motor and sensory neuropathy with agenesis of the corpus callosum.</title>
        <authorList>
            <person name="Salin-Cantegrel A."/>
            <person name="Riviere J.B."/>
            <person name="Shekarabi M."/>
            <person name="Rasheed S."/>
            <person name="Dacal S."/>
            <person name="Laganiere J."/>
            <person name="Gaudet R."/>
            <person name="Rochefort D."/>
            <person name="Lesca G."/>
            <person name="Gaspar C."/>
            <person name="Dion P.A."/>
            <person name="Lapointe J.Y."/>
            <person name="Rouleau G.A."/>
        </authorList>
    </citation>
    <scope>VARIANT ACCPN 1134-ARG--SER-1150 DEL</scope>
    <scope>CHARACTERIZATION OF VARIANTS ACCPN CYS-207 AND 1134-ARG--SER-1150 DEL</scope>
    <scope>FUNCTION</scope>
    <scope>SUBUNIT</scope>
    <scope>TISSUE SPECIFICITY</scope>
</reference>
<reference key="28">
    <citation type="journal article" date="2016" name="Sci. Signal.">
        <title>Peripheral motor neuropathy is associated with defective kinase regulation of the KCC3 cotransporter.</title>
        <authorList>
            <person name="Kahle K.T."/>
            <person name="Flores B."/>
            <person name="Bharucha-Goebel D."/>
            <person name="Zhang J."/>
            <person name="Donkervoort S."/>
            <person name="Hegde M."/>
            <person name="Hussain G."/>
            <person name="Duran D."/>
            <person name="Liang B."/>
            <person name="Sun D."/>
            <person name="Boennemann C.G."/>
            <person name="Delpire E."/>
        </authorList>
    </citation>
    <scope>INVOLVEMENT IN CMT2II</scope>
    <scope>VARIANT CMT2II ALA-991</scope>
    <scope>CHARACTERIZATION OF VARIANT CMT2II ALA-991</scope>
    <scope>FUNCTION</scope>
    <scope>PHOSPHORYLATION AT THR-991</scope>
</reference>
<reference key="29">
    <citation type="journal article" date="2020" name="J. Med. Genet.">
        <title>De novo variants in SLC12A6 cause sporadic early-onset progressive sensorimotor neuropathy.</title>
        <authorList>
            <person name="Park J."/>
            <person name="Flores B.R."/>
            <person name="Scherer K."/>
            <person name="Kuepper H."/>
            <person name="Rossi M."/>
            <person name="Rupprich K."/>
            <person name="Rautenberg M."/>
            <person name="Deininger N."/>
            <person name="Weichselbaum A."/>
            <person name="Grimm A."/>
            <person name="Sturm M."/>
            <person name="Grasshoff U."/>
            <person name="Delpire E."/>
            <person name="Haack T.B."/>
        </authorList>
    </citation>
    <scope>VARIANTS CMT2II HIS-207 AND CYS-679</scope>
</reference>
<reference key="30">
    <citation type="journal article" date="2022" name="Ann. Clin. Transl. Neurol.">
        <title>Novel heterozygous variants of SLC12A6 in Japanese families with Charcot-Marie-Tooth disease.</title>
        <authorList>
            <person name="Ando M."/>
            <person name="Higuchi Y."/>
            <person name="Yuan J."/>
            <person name="Yoshimura A."/>
            <person name="Taniguchi T."/>
            <person name="Takei J."/>
            <person name="Takeuchi M."/>
            <person name="Hiramatsu Y."/>
            <person name="Shimizu F."/>
            <person name="Kubota M."/>
            <person name="Takeshima A."/>
            <person name="Ueda T."/>
            <person name="Koh K."/>
            <person name="Nagaoka U."/>
            <person name="Tokashiki T."/>
            <person name="Sawai S."/>
            <person name="Sakiyama Y."/>
            <person name="Hashiguchi A."/>
            <person name="Sato R."/>
            <person name="Kanda T."/>
            <person name="Okamoto Y."/>
            <person name="Takashima H."/>
        </authorList>
    </citation>
    <scope>VARIANTS CMT2II HIS-207; LYS-289; 578-PHE--SER-1150 DEL AND SER-679</scope>
</reference>
<protein>
    <recommendedName>
        <fullName>Solute carrier family 12 member 6</fullName>
    </recommendedName>
    <alternativeName>
        <fullName>Electroneutral potassium-chloride cotransporter 3</fullName>
    </alternativeName>
    <alternativeName>
        <fullName evidence="23">K-Cl cotransporter 3</fullName>
    </alternativeName>
</protein>